<protein>
    <recommendedName>
        <fullName>Genome polyprotein</fullName>
    </recommendedName>
    <component>
        <recommendedName>
            <fullName>Core protein precursor</fullName>
        </recommendedName>
        <alternativeName>
            <fullName>Capsid protein C</fullName>
        </alternativeName>
        <alternativeName>
            <fullName>p23</fullName>
        </alternativeName>
    </component>
    <component>
        <recommendedName>
            <fullName>Mature core protein</fullName>
        </recommendedName>
        <alternativeName>
            <fullName>p21</fullName>
        </alternativeName>
    </component>
    <component>
        <recommendedName>
            <fullName>Envelope glycoprotein E1</fullName>
        </recommendedName>
        <alternativeName>
            <fullName>gp32</fullName>
        </alternativeName>
        <alternativeName>
            <fullName>gp35</fullName>
        </alternativeName>
    </component>
    <component>
        <recommendedName>
            <fullName>Envelope glycoprotein E2</fullName>
        </recommendedName>
        <alternativeName>
            <fullName>NS1</fullName>
        </alternativeName>
        <alternativeName>
            <fullName>gp68</fullName>
        </alternativeName>
        <alternativeName>
            <fullName>gp70</fullName>
        </alternativeName>
    </component>
    <component>
        <recommendedName>
            <fullName>Viroporin p7</fullName>
        </recommendedName>
    </component>
    <component>
        <recommendedName>
            <fullName>Protease NS2</fullName>
            <shortName>p23</shortName>
            <ecNumber evidence="3">3.4.22.-</ecNumber>
        </recommendedName>
        <alternativeName>
            <fullName>Non-structural protein 2</fullName>
            <shortName>NS2</shortName>
        </alternativeName>
    </component>
    <component>
        <recommendedName>
            <fullName>Serine protease/helicase NS3</fullName>
            <ecNumber evidence="5">3.4.21.98</ecNumber>
            <ecNumber evidence="5">3.6.1.15</ecNumber>
            <ecNumber evidence="5">3.6.4.13</ecNumber>
        </recommendedName>
        <alternativeName>
            <fullName>Hepacivirin</fullName>
        </alternativeName>
        <alternativeName>
            <fullName evidence="5">NS3 helicase</fullName>
        </alternativeName>
        <alternativeName>
            <fullName evidence="5">NS3 protease</fullName>
        </alternativeName>
        <alternativeName>
            <fullName>NS3P</fullName>
        </alternativeName>
        <alternativeName>
            <fullName>Viroporin p70</fullName>
        </alternativeName>
    </component>
    <component>
        <recommendedName>
            <fullName>Non-structural protein 4A</fullName>
            <shortName>NS4A</shortName>
        </recommendedName>
        <alternativeName>
            <fullName>p8</fullName>
        </alternativeName>
    </component>
    <component>
        <recommendedName>
            <fullName>Non-structural protein 4B</fullName>
            <shortName>NS4B</shortName>
        </recommendedName>
        <alternativeName>
            <fullName>p27</fullName>
        </alternativeName>
    </component>
    <component>
        <recommendedName>
            <fullName>Non-structural protein 5A</fullName>
            <shortName>NS5A</shortName>
        </recommendedName>
        <alternativeName>
            <fullName>p56/58</fullName>
        </alternativeName>
    </component>
    <component>
        <recommendedName>
            <fullName>RNA-directed RNA polymerase</fullName>
            <ecNumber evidence="5">2.7.7.48</ecNumber>
        </recommendedName>
        <alternativeName>
            <fullName>NS5B</fullName>
        </alternativeName>
        <alternativeName>
            <fullName>p68</fullName>
        </alternativeName>
    </component>
</protein>
<feature type="initiator methionine" description="Removed; by host" evidence="4">
    <location>
        <position position="1"/>
    </location>
</feature>
<feature type="chain" id="PRO_0000450919" description="Genome polyprotein">
    <location>
        <begin position="2"/>
        <end position="3033"/>
    </location>
</feature>
<feature type="chain" id="PRO_0000045628" description="Core protein precursor" evidence="13">
    <location>
        <begin position="2"/>
        <end position="191"/>
    </location>
</feature>
<feature type="chain" id="PRO_0000045629" description="Mature core protein">
    <location>
        <begin position="2"/>
        <end position="177"/>
    </location>
</feature>
<feature type="propeptide" id="PRO_0000045630" description="ER anchor for the core protein, removed in mature form by host signal peptidase">
    <location>
        <begin position="178"/>
        <end position="191"/>
    </location>
</feature>
<feature type="chain" id="PRO_0000045631" description="Envelope glycoprotein E1">
    <location>
        <begin position="192"/>
        <end position="383"/>
    </location>
</feature>
<feature type="chain" id="PRO_0000045632" description="Envelope glycoprotein E2">
    <location>
        <begin position="384"/>
        <end position="750"/>
    </location>
</feature>
<feature type="chain" id="PRO_0000045633" description="Viroporin p7">
    <location>
        <begin position="751"/>
        <end position="813"/>
    </location>
</feature>
<feature type="chain" id="PRO_0000045634" description="Protease NS2" evidence="16">
    <location>
        <begin position="814"/>
        <end position="1030"/>
    </location>
</feature>
<feature type="chain" id="PRO_0000045635" description="Serine protease/helicase NS3">
    <location>
        <begin position="1031"/>
        <end position="1661"/>
    </location>
</feature>
<feature type="chain" id="PRO_0000045636" description="Non-structural protein 4A">
    <location>
        <begin position="1662"/>
        <end position="1715"/>
    </location>
</feature>
<feature type="chain" id="PRO_0000045637" description="Non-structural protein 4B">
    <location>
        <begin position="1716"/>
        <end position="1976"/>
    </location>
</feature>
<feature type="chain" id="PRO_0000045638" description="Non-structural protein 5A">
    <location>
        <begin position="1977"/>
        <end position="2442"/>
    </location>
</feature>
<feature type="chain" id="PRO_0000045639" description="RNA-directed RNA polymerase">
    <location>
        <begin position="2443"/>
        <end position="3033"/>
    </location>
</feature>
<feature type="topological domain" description="Lumenal" evidence="5">
    <location>
        <begin position="190"/>
        <end position="358"/>
    </location>
</feature>
<feature type="transmembrane region" description="Helical" evidence="5">
    <location>
        <begin position="359"/>
        <end position="379"/>
    </location>
</feature>
<feature type="topological domain" description="Lumenal" evidence="5">
    <location>
        <begin position="380"/>
        <end position="729"/>
    </location>
</feature>
<feature type="transmembrane region" description="Helical" evidence="5">
    <location>
        <begin position="730"/>
        <end position="750"/>
    </location>
</feature>
<feature type="topological domain" description="Lumenal" evidence="5">
    <location>
        <begin position="751"/>
        <end position="761"/>
    </location>
</feature>
<feature type="transmembrane region" description="Helical" evidence="5">
    <location>
        <begin position="762"/>
        <end position="782"/>
    </location>
</feature>
<feature type="topological domain" description="Cytoplasmic" evidence="5">
    <location>
        <begin position="783"/>
        <end position="786"/>
    </location>
</feature>
<feature type="transmembrane region" description="Helical" evidence="5">
    <location>
        <begin position="787"/>
        <end position="807"/>
    </location>
</feature>
<feature type="topological domain" description="Lumenal" evidence="5">
    <location>
        <begin position="808"/>
        <end position="817"/>
    </location>
</feature>
<feature type="transmembrane region" description="Helical" evidence="12">
    <location>
        <begin position="818"/>
        <end position="838"/>
    </location>
</feature>
<feature type="topological domain" description="Cytoplasmic" evidence="12">
    <location>
        <begin position="839"/>
        <end position="885"/>
    </location>
</feature>
<feature type="transmembrane region" description="Helical" evidence="12">
    <location>
        <begin position="886"/>
        <end position="906"/>
    </location>
</feature>
<feature type="topological domain" description="Lumenal" evidence="12">
    <location>
        <begin position="907"/>
        <end position="932"/>
    </location>
</feature>
<feature type="transmembrane region" description="Helical" evidence="12">
    <location>
        <begin position="933"/>
        <end position="953"/>
    </location>
</feature>
<feature type="topological domain" description="Cytoplasmic" evidence="12">
    <location>
        <begin position="954"/>
        <end position="1661"/>
    </location>
</feature>
<feature type="transmembrane region" description="Helical" evidence="13">
    <location>
        <begin position="1662"/>
        <end position="1682"/>
    </location>
</feature>
<feature type="topological domain" description="Cytoplasmic" evidence="13">
    <location>
        <begin position="1683"/>
        <end position="1809"/>
    </location>
</feature>
<feature type="transmembrane region" description="Helical" evidence="13">
    <location>
        <begin position="1810"/>
        <end position="1830"/>
    </location>
</feature>
<feature type="topological domain" description="Lumenal" evidence="5">
    <location>
        <begin position="1831"/>
        <end position="1832"/>
    </location>
</feature>
<feature type="transmembrane region" description="Helical" evidence="13">
    <location>
        <begin position="1833"/>
        <end position="1853"/>
    </location>
</feature>
<feature type="topological domain" description="Cytoplasmic" evidence="13">
    <location>
        <position position="1854"/>
    </location>
</feature>
<feature type="transmembrane region" description="Helical" evidence="13">
    <location>
        <begin position="1855"/>
        <end position="1875"/>
    </location>
</feature>
<feature type="topological domain" description="Lumenal" evidence="13">
    <location>
        <begin position="1876"/>
        <end position="1885"/>
    </location>
</feature>
<feature type="transmembrane region" description="Helical" evidence="13">
    <location>
        <begin position="1886"/>
        <end position="1906"/>
    </location>
</feature>
<feature type="topological domain" description="Cytoplasmic" evidence="13">
    <location>
        <begin position="1907"/>
        <end position="1976"/>
    </location>
</feature>
<feature type="intramembrane region" evidence="5">
    <location>
        <begin position="1977"/>
        <end position="2007"/>
    </location>
</feature>
<feature type="topological domain" description="Cytoplasmic" evidence="5">
    <location>
        <begin position="2008"/>
        <end position="3012"/>
    </location>
</feature>
<feature type="transmembrane region" description="Helical" evidence="5">
    <location>
        <begin position="3013"/>
        <end position="3033"/>
    </location>
</feature>
<feature type="domain" description="Peptidase C18" evidence="16">
    <location>
        <begin position="907"/>
        <end position="1030"/>
    </location>
</feature>
<feature type="domain" description="Peptidase S29" evidence="17">
    <location>
        <begin position="1031"/>
        <end position="1212"/>
    </location>
</feature>
<feature type="domain" description="Helicase ATP-binding" evidence="15">
    <location>
        <begin position="1221"/>
        <end position="1373"/>
    </location>
</feature>
<feature type="domain" description="RdRp catalytic" evidence="14">
    <location>
        <begin position="2656"/>
        <end position="2774"/>
    </location>
</feature>
<feature type="region of interest" description="Disordered" evidence="5">
    <location>
        <begin position="2"/>
        <end position="75"/>
    </location>
</feature>
<feature type="region of interest" description="Interaction with DDX3X" evidence="9">
    <location>
        <begin position="2"/>
        <end position="59"/>
    </location>
</feature>
<feature type="region of interest" description="Interaction with EIF2AK2/PKR" evidence="2">
    <location>
        <begin position="2"/>
        <end position="58"/>
    </location>
</feature>
<feature type="region of interest" description="Interaction with STAT1" evidence="2">
    <location>
        <begin position="2"/>
        <end position="23"/>
    </location>
</feature>
<feature type="region of interest" description="Important for endoplasmic reticulum and mitochondrial localization" evidence="2">
    <location>
        <begin position="112"/>
        <end position="152"/>
    </location>
</feature>
<feature type="region of interest" description="Interaction with APOA2" evidence="6">
    <location>
        <begin position="122"/>
        <end position="173"/>
    </location>
</feature>
<feature type="region of interest" description="Important for lipid droplets localization" evidence="5">
    <location>
        <begin position="164"/>
        <end position="167"/>
    </location>
</feature>
<feature type="region of interest" description="Important for fusion" evidence="5">
    <location>
        <begin position="265"/>
        <end position="296"/>
    </location>
</feature>
<feature type="region of interest" description="HVR1" evidence="5">
    <location>
        <begin position="385"/>
        <end position="412"/>
    </location>
</feature>
<feature type="region of interest" description="HVR2" evidence="5">
    <location>
        <begin position="475"/>
        <end position="480"/>
    </location>
</feature>
<feature type="region of interest" description="CD81-binding 1" evidence="3">
    <location>
        <begin position="482"/>
        <end position="495"/>
    </location>
</feature>
<feature type="region of interest" description="CD81-binding 2" evidence="3">
    <location>
        <begin position="546"/>
        <end position="553"/>
    </location>
</feature>
<feature type="region of interest" description="PKR/eIF2-alpha phosphorylation homology domain (PePHD)">
    <location>
        <begin position="664"/>
        <end position="675"/>
    </location>
</feature>
<feature type="region of interest" description="Protease NS2-3" evidence="3">
    <location>
        <begin position="908"/>
        <end position="1210"/>
    </location>
</feature>
<feature type="region of interest" description="Interaction with host SCPS1" evidence="11">
    <location>
        <begin position="933"/>
        <end position="953"/>
    </location>
</feature>
<feature type="region of interest" description="RNA-binding" evidence="3">
    <location>
        <begin position="1490"/>
        <end position="1502"/>
    </location>
</feature>
<feature type="region of interest" description="NS3-binding" evidence="5">
    <location>
        <begin position="1683"/>
        <end position="1694"/>
    </location>
</feature>
<feature type="region of interest" description="Transcriptional activation" evidence="13">
    <location>
        <begin position="2124"/>
        <end position="2332"/>
    </location>
</feature>
<feature type="region of interest" description="FKBP8-binding" evidence="2">
    <location>
        <begin position="2124"/>
        <end position="2212"/>
    </location>
</feature>
<feature type="region of interest" description="Interaction with non-structural protein 4A" evidence="2">
    <location>
        <begin position="2139"/>
        <end position="2143"/>
    </location>
</feature>
<feature type="region of interest" description="Disordered" evidence="18">
    <location>
        <begin position="2192"/>
        <end position="2213"/>
    </location>
</feature>
<feature type="region of interest" description="Interaction with host SKP2" evidence="5">
    <location>
        <begin position="2193"/>
        <end position="2460"/>
    </location>
</feature>
<feature type="region of interest" description="Interaction with EIF2AK2/PKR" evidence="3">
    <location>
        <begin position="2214"/>
        <end position="2275"/>
    </location>
</feature>
<feature type="region of interest" description="ISDR" evidence="2">
    <location>
        <begin position="2214"/>
        <end position="2249"/>
    </location>
</feature>
<feature type="region of interest" description="NS4B-binding" evidence="13">
    <location>
        <begin position="2249"/>
        <end position="2306"/>
    </location>
</feature>
<feature type="region of interest" description="V3">
    <location>
        <begin position="2299"/>
        <end position="2377"/>
    </location>
</feature>
<feature type="region of interest" description="Disordered" evidence="18">
    <location>
        <begin position="2354"/>
        <end position="2431"/>
    </location>
</feature>
<feature type="short sequence motif" description="Nuclear localization signal" evidence="11">
    <location>
        <begin position="5"/>
        <end position="13"/>
    </location>
</feature>
<feature type="short sequence motif" description="Nuclear localization signal" evidence="11">
    <location>
        <begin position="38"/>
        <end position="43"/>
    </location>
</feature>
<feature type="short sequence motif" description="Nuclear localization signal" evidence="11">
    <location>
        <begin position="58"/>
        <end position="64"/>
    </location>
</feature>
<feature type="short sequence motif" description="Nuclear localization signal" evidence="11">
    <location>
        <begin position="66"/>
        <end position="71"/>
    </location>
</feature>
<feature type="short sequence motif" description="DECH box" evidence="11">
    <location>
        <begin position="1320"/>
        <end position="1323"/>
    </location>
</feature>
<feature type="short sequence motif" description="SH3-binding" evidence="13">
    <location>
        <begin position="2322"/>
        <end position="2325"/>
    </location>
</feature>
<feature type="short sequence motif" description="Nuclear localization signal" evidence="2">
    <location>
        <begin position="2327"/>
        <end position="2335"/>
    </location>
</feature>
<feature type="compositionally biased region" description="Basic residues" evidence="18">
    <location>
        <begin position="7"/>
        <end position="16"/>
    </location>
</feature>
<feature type="compositionally biased region" description="Low complexity" evidence="18">
    <location>
        <begin position="32"/>
        <end position="47"/>
    </location>
</feature>
<feature type="compositionally biased region" description="Low complexity" evidence="18">
    <location>
        <begin position="2198"/>
        <end position="2213"/>
    </location>
</feature>
<feature type="compositionally biased region" description="Polar residues" evidence="18">
    <location>
        <begin position="2355"/>
        <end position="2391"/>
    </location>
</feature>
<feature type="active site" description="For protease NS2 activity; shared with dimeric partner" evidence="16">
    <location>
        <position position="956"/>
    </location>
</feature>
<feature type="active site" description="For protease NS2 activity; shared with dimeric partner" evidence="16">
    <location>
        <position position="976"/>
    </location>
</feature>
<feature type="active site" description="For protease NS2 activity; shared with dimeric partner" evidence="16">
    <location>
        <position position="997"/>
    </location>
</feature>
<feature type="active site" description="Charge relay system; for serine protease NS3 activity" evidence="17">
    <location>
        <position position="1087"/>
    </location>
</feature>
<feature type="active site" description="Charge relay system; for serine protease NS3 activity" evidence="17">
    <location>
        <position position="1111"/>
    </location>
</feature>
<feature type="active site" description="Charge relay system; for serine protease NS3 activity" evidence="17">
    <location>
        <position position="1169"/>
    </location>
</feature>
<feature type="binding site" evidence="17">
    <location>
        <position position="1127"/>
    </location>
    <ligand>
        <name>Zn(2+)</name>
        <dbReference type="ChEBI" id="CHEBI:29105"/>
        <label>1</label>
        <note>structural; for NS3 protease activity and NS2/3 auto-cleavage activity</note>
    </ligand>
</feature>
<feature type="binding site" evidence="17">
    <location>
        <position position="1127"/>
    </location>
    <ligand>
        <name>Zn(2+)</name>
        <dbReference type="ChEBI" id="CHEBI:29105"/>
    </ligand>
</feature>
<feature type="binding site" evidence="17">
    <location>
        <position position="1129"/>
    </location>
    <ligand>
        <name>Zn(2+)</name>
        <dbReference type="ChEBI" id="CHEBI:29105"/>
        <label>1</label>
        <note>structural; for NS3 protease activity and NS2/3 auto-cleavage activity</note>
    </ligand>
</feature>
<feature type="binding site" evidence="17">
    <location>
        <position position="1175"/>
    </location>
    <ligand>
        <name>Zn(2+)</name>
        <dbReference type="ChEBI" id="CHEBI:29105"/>
        <label>1</label>
        <note>structural; for NS3 protease activity and NS2/3 auto-cleavage activity</note>
    </ligand>
</feature>
<feature type="binding site" evidence="17">
    <location>
        <position position="1179"/>
    </location>
    <ligand>
        <name>Zn(2+)</name>
        <dbReference type="ChEBI" id="CHEBI:29105"/>
        <label>1</label>
        <note>structural; for NS3 protease activity and NS2/3 auto-cleavage activity</note>
    </ligand>
</feature>
<feature type="binding site" evidence="15">
    <location>
        <begin position="1234"/>
        <end position="1241"/>
    </location>
    <ligand>
        <name>ATP</name>
        <dbReference type="ChEBI" id="CHEBI:30616"/>
    </ligand>
</feature>
<feature type="binding site" evidence="12">
    <location>
        <position position="1241"/>
    </location>
    <ligand>
        <name>Mg(2+)</name>
        <dbReference type="ChEBI" id="CHEBI:18420"/>
        <label>1</label>
        <note>catalytic; for NS3 helicase activity</note>
    </ligand>
</feature>
<feature type="binding site" evidence="12">
    <location>
        <position position="1321"/>
    </location>
    <ligand>
        <name>Mg(2+)</name>
        <dbReference type="ChEBI" id="CHEBI:18420"/>
        <label>1</label>
        <note>catalytic; for NS3 helicase activity</note>
    </ligand>
</feature>
<feature type="binding site" evidence="12">
    <location>
        <position position="2015"/>
    </location>
    <ligand>
        <name>Zn(2+)</name>
        <dbReference type="ChEBI" id="CHEBI:29105"/>
        <label>2</label>
        <note>structural</note>
    </ligand>
</feature>
<feature type="binding site" evidence="12">
    <location>
        <position position="2033"/>
    </location>
    <ligand>
        <name>Zn(2+)</name>
        <dbReference type="ChEBI" id="CHEBI:29105"/>
        <label>2</label>
        <note>structural</note>
    </ligand>
</feature>
<feature type="binding site" evidence="12">
    <location>
        <position position="2035"/>
    </location>
    <ligand>
        <name>Zn(2+)</name>
        <dbReference type="ChEBI" id="CHEBI:29105"/>
        <label>2</label>
        <note>structural</note>
    </ligand>
</feature>
<feature type="binding site" evidence="12">
    <location>
        <position position="2056"/>
    </location>
    <ligand>
        <name>Zn(2+)</name>
        <dbReference type="ChEBI" id="CHEBI:29105"/>
        <label>2</label>
        <note>structural</note>
    </ligand>
</feature>
<feature type="binding site" evidence="3">
    <location>
        <position position="2662"/>
    </location>
    <ligand>
        <name>Mg(2+)</name>
        <dbReference type="ChEBI" id="CHEBI:18420"/>
        <label>2</label>
        <note>catalytic; for RNA-directed RNA polymerase activity</note>
    </ligand>
</feature>
<feature type="binding site" evidence="3">
    <location>
        <position position="2760"/>
    </location>
    <ligand>
        <name>Mg(2+)</name>
        <dbReference type="ChEBI" id="CHEBI:18420"/>
        <label>2</label>
        <note>catalytic; for RNA-directed RNA polymerase activity</note>
    </ligand>
</feature>
<feature type="binding site" evidence="3">
    <location>
        <position position="2761"/>
    </location>
    <ligand>
        <name>Mg(2+)</name>
        <dbReference type="ChEBI" id="CHEBI:18420"/>
        <label>2</label>
        <note>catalytic; for RNA-directed RNA polymerase activity</note>
    </ligand>
</feature>
<feature type="site" description="Cleavage; by host signal peptide peptidase" evidence="2">
    <location>
        <begin position="177"/>
        <end position="178"/>
    </location>
</feature>
<feature type="site" description="Cleavage; by host signal peptidase" evidence="2">
    <location>
        <begin position="191"/>
        <end position="192"/>
    </location>
</feature>
<feature type="site" description="Cleavage; by host signal peptidase" evidence="2">
    <location>
        <begin position="383"/>
        <end position="384"/>
    </location>
</feature>
<feature type="site" description="Cleavage; by host signal peptidase">
    <location>
        <begin position="750"/>
        <end position="751"/>
    </location>
</feature>
<feature type="site" description="Cleavage; by host signal peptidase">
    <location>
        <begin position="813"/>
        <end position="814"/>
    </location>
</feature>
<feature type="site" description="Cleavage; by protease NS2" evidence="16">
    <location>
        <begin position="1030"/>
        <end position="1031"/>
    </location>
</feature>
<feature type="site" description="Cleavage; by serine protease NS3" evidence="5">
    <location>
        <begin position="1661"/>
        <end position="1662"/>
    </location>
</feature>
<feature type="site" description="Cleavage; by serine protease NS3" evidence="5">
    <location>
        <begin position="1715"/>
        <end position="1716"/>
    </location>
</feature>
<feature type="site" description="Cleavage; by serine protease NS3" evidence="5">
    <location>
        <begin position="1976"/>
        <end position="1977"/>
    </location>
</feature>
<feature type="site" description="Cleavage; by serine protease NS3" evidence="5">
    <location>
        <begin position="2442"/>
        <end position="2443"/>
    </location>
</feature>
<feature type="modified residue" description="N-acetylserine; by host" evidence="10">
    <location>
        <position position="2"/>
    </location>
</feature>
<feature type="modified residue" description="Phosphoserine; by host" evidence="7">
    <location>
        <position position="53"/>
    </location>
</feature>
<feature type="modified residue" description="Phosphoserine; by host" evidence="7">
    <location>
        <position position="99"/>
    </location>
</feature>
<feature type="modified residue" description="Phosphoserine; by host" evidence="7">
    <location>
        <position position="116"/>
    </location>
</feature>
<feature type="modified residue" description="Phosphoserine; by host" evidence="12">
    <location>
        <position position="2198"/>
    </location>
</feature>
<feature type="modified residue" description="Phosphoserine; by host" evidence="12">
    <location>
        <position position="2201"/>
    </location>
</feature>
<feature type="modified residue" description="Phosphoserine; by host" evidence="12">
    <location>
        <position position="2205"/>
    </location>
</feature>
<feature type="modified residue" description="Phosphoserine; by host" evidence="12">
    <location>
        <position position="2208"/>
    </location>
</feature>
<feature type="modified residue" description="Phosphoserine; by host" evidence="11">
    <location>
        <position position="2211"/>
    </location>
</feature>
<feature type="modified residue" description="Phosphoserine; by host" evidence="11">
    <location>
        <position position="2214"/>
    </location>
</feature>
<feature type="modified residue" description="Phosphoserine; by host" evidence="2">
    <location>
        <position position="2471"/>
    </location>
</feature>
<feature type="modified residue" description="Phosphoserine; by host" evidence="2">
    <location>
        <position position="2484"/>
    </location>
</feature>
<feature type="lipid moiety-binding region" description="S-palmitoyl cysteine; by host" evidence="5">
    <location>
        <position position="926"/>
    </location>
</feature>
<feature type="lipid moiety-binding region" description="S-palmitoyl cysteine; by host" evidence="5">
    <location>
        <position position="1976"/>
    </location>
</feature>
<feature type="glycosylation site" description="N-linked (GlcNAc...) asparagine; by host" evidence="5">
    <location>
        <position position="196"/>
    </location>
</feature>
<feature type="glycosylation site" description="N-linked (GlcNAc...) asparagine; by host" evidence="5">
    <location>
        <position position="209"/>
    </location>
</feature>
<feature type="glycosylation site" description="N-linked (GlcNAc...) asparagine; by host" evidence="5">
    <location>
        <position position="305"/>
    </location>
</feature>
<feature type="glycosylation site" description="N-linked (GlcNAc...) (high mannose) asparagine; by host" evidence="5">
    <location>
        <position position="417"/>
    </location>
</feature>
<feature type="glycosylation site" description="N-linked (GlcNAc...) (high mannose) asparagine; by host" evidence="5">
    <location>
        <position position="423"/>
    </location>
</feature>
<feature type="glycosylation site" description="N-linked (GlcNAc...) (high mannose) asparagine; by host" evidence="5">
    <location>
        <position position="430"/>
    </location>
</feature>
<feature type="glycosylation site" description="N-linked (GlcNAc...) asparagine; by host" evidence="13">
    <location>
        <position position="448"/>
    </location>
</feature>
<feature type="glycosylation site" description="N-linked (GlcNAc...) asparagine; by host" evidence="13">
    <location>
        <position position="477"/>
    </location>
</feature>
<feature type="glycosylation site" description="N-linked (GlcNAc...) asparagine; by host" evidence="13">
    <location>
        <position position="534"/>
    </location>
</feature>
<feature type="glycosylation site" description="N-linked (GlcNAc...) asparagine; by host" evidence="13">
    <location>
        <position position="558"/>
    </location>
</feature>
<feature type="glycosylation site" description="N-linked (GlcNAc...) (high mannose) asparagine; by host" evidence="5">
    <location>
        <position position="627"/>
    </location>
</feature>
<feature type="glycosylation site" description="N-linked (GlcNAc...) (high mannose) asparagine; by host" evidence="5">
    <location>
        <position position="649"/>
    </location>
</feature>
<feature type="disulfide bond" evidence="5">
    <location>
        <begin position="429"/>
        <end position="554"/>
    </location>
</feature>
<feature type="disulfide bond" evidence="5">
    <location>
        <begin position="452"/>
        <end position="459"/>
    </location>
</feature>
<feature type="disulfide bond" evidence="5">
    <location>
        <begin position="488"/>
        <end position="496"/>
    </location>
</feature>
<feature type="disulfide bond" evidence="5">
    <location>
        <begin position="505"/>
        <end position="510"/>
    </location>
</feature>
<feature type="disulfide bond" evidence="5">
    <location>
        <begin position="566"/>
        <end position="571"/>
    </location>
</feature>
<feature type="disulfide bond" evidence="5">
    <location>
        <begin position="585"/>
        <end position="589"/>
    </location>
</feature>
<feature type="disulfide bond" evidence="5">
    <location>
        <begin position="601"/>
        <end position="624"/>
    </location>
</feature>
<feature type="disulfide bond" evidence="5">
    <location>
        <begin position="611"/>
        <end position="648"/>
    </location>
</feature>
<feature type="disulfide bond" evidence="5">
    <location>
        <begin position="656"/>
        <end position="681"/>
    </location>
</feature>
<feature type="cross-link" description="Glycyl lysine isopeptide (Lys-Gly) (interchain with G-Cter in ubiquitin)" evidence="5">
    <location>
        <position position="2350"/>
    </location>
</feature>
<reference key="1">
    <citation type="journal article" date="2001" name="Arch. Virol.">
        <title>Down-regulation of translation driven by hepatitis C virus internal ribosomal entry site by the 3' untranslated region of RNA.</title>
        <authorList>
            <person name="Murakami K."/>
            <person name="Abe M."/>
            <person name="Kageyama T."/>
            <person name="Kamoshita N."/>
            <person name="Nomoto A."/>
        </authorList>
    </citation>
    <scope>NUCLEOTIDE SEQUENCE [GENOMIC RNA]</scope>
</reference>
<reference key="2">
    <citation type="journal article" date="2000" name="J. Viral Hepat.">
        <title>Properties of the hepatitis C virus core protein: a structural protein that modulates cellular processes.</title>
        <authorList>
            <person name="McLauchlan J."/>
        </authorList>
    </citation>
    <scope>REVIEW</scope>
</reference>
<reference key="3">
    <citation type="journal article" date="2004" name="Hepatology">
        <title>Structural biology of hepatitis C virus.</title>
        <authorList>
            <person name="Penin F."/>
            <person name="Dubuisson J."/>
            <person name="Rey F.A."/>
            <person name="Moradpour D."/>
            <person name="Pawlotsky J.-M."/>
        </authorList>
    </citation>
    <scope>REVIEW</scope>
</reference>
<proteinExistence type="inferred from homology"/>
<organism>
    <name type="scientific">Hepatitis C virus genotype 2b (isolate JPUT971017)</name>
    <name type="common">HCV</name>
    <dbReference type="NCBI Taxonomy" id="356412"/>
    <lineage>
        <taxon>Viruses</taxon>
        <taxon>Riboviria</taxon>
        <taxon>Orthornavirae</taxon>
        <taxon>Kitrinoviricota</taxon>
        <taxon>Flasuviricetes</taxon>
        <taxon>Amarillovirales</taxon>
        <taxon>Flaviviridae</taxon>
        <taxon>Hepacivirus</taxon>
        <taxon>Hepacivirus hominis</taxon>
    </lineage>
</organism>
<sequence length="3033" mass="329985">MSTNPKPQRKTKRNTNRRPQDVKFPGGGQIVGGVYLLPRRGPRLGVRATRKTSERSQPRGRRQPIPKDRRSTGKSWGKPGYPWPLYGNEGCGWAGWLLSPRGSRPTWGPSDPRHRSRNLGRVIDTITCGFADLMGYIPVVGAPVGGVARALAHGVRVLEDGINYATRNLPGCSFSIFLLALLSCVTVPVSSVEIRNISTSYYATNDCSNNSITWQLTNAVLHLPGCVPCENDNGTLRCWIQVTPNVAVKHRGALTHNLRAHVDVIVMAATVCSALYVGDVCGAVMIVSQALIVSPERHNFTQECNCSIYQGHITGQRMAWDMMLNWSPTLTMILAYAARVPELVLEIVFGGHWGVVFGLAYFSMQGAWAKVIAILLLVAGVDATTYSTGATVGRTVGSFAGLFKLGAQQNVQLINTNGSWHINRTALNCNDSLHTGFMAALFYANKFNSSGCPERLSSCRGLDDFRIGWGTLEYETNVTNVEDMRPYCWHYPPKPCGIVPAQSVCGPVYCFTPSPVVVGTTDRQGVPTYNWGDNETDVFLLNSTRPPRGAWFGCTWMNGTGFTKTCGAPPCRIRKDFNSTLDLLCPTDCFRKHPDATYVKCGAGPWLTPRCLIDYPYRLWHYPCTVNFTIFKVRMYVGGVEHRFSAACNFTRGDRCRLEDRDRGQQSPLLHSTTEWAVLPCSFSDLPALSTGLLHLHQNIVDVQYLYGLSPAVTKYIVKWEWVVLLFLLLADARICACLWMLIILGQAEAALEKLIILHSASAASANGPLWFFIFFTAAWYLKGRVVPAATYSVLGLWSFLLLVLALPQQAYALDAAEQGELGLVILMIISIFTLTPAYKILLSRSVWWLSYMLVLAEAQVQQWVPPLEARGGRDGIIWVAVILHPHLVFEVTKWLLAILGSAYLLKASLLRVPYFVRAHALLRVCTLVRHLAGARYIQMLLITMGRWTGTYIYDHLSPLSTWAAQGLRDLAVAVEPVVFSPMEKKVIVWGAETVACGDILHGLPVSARLGREVLLGPADGYTSKGWKLLAPITAYTQQTRGLLGAIVVSLTGRDKNEQAGQVQVLSSVTQSFLGTSISGVLWTVYHGAGNKTLASPRGPVTQMYTSAEGDLVGWPSPPGTKSLDPCTCGAVDLYLVTRNADVIPVRRKDDRRGALLSPRPLSTLKGSSGGPVLCPRGHAVGLFRAAVCARGVAKSIDFIPVESLDIARRTPSFSDNSTPPAVPQTYQVGYLHAPTGSGKSTKVPAAYTSQGYKVLVLNPSVAATLGFGAYMSKAHGINPNIRTGVRTVTTGDSITYSTYGKFLADGGCSAGAYDIIICDECHSVDATTILGIGTVLDQAETAGVRLVVLATATPPGTVTTPHANIEEVALGHEGEIPFYGKAIPLASIKGGRHLIFCHSKKKCDELAAALRGMGVNAVAYYRGLDVSVIPTQGDVVVVATDALMTGYTGDFDSVIDCNVAVTQIVDFSLDPTFTITTQTVPQDAVSRSQRRGRTGRGRLGTYRYVSSGERPSGMFDSVVLCECYDAGAAWYELTPAETTVRLRAYFNTPGLPVCQDHLEFWEAVFTGLTHIDAHFLSQTKQGGDNFAYLTAYQATVCARAKAPPPSWDVMWKCLTRLKPTLTGPTPLLYRLGAVTNEITLTHPVTKYIATCMQADLEVMTSTWVLAGGVLAAVAAYCLATGCISIIGRIHLNDQVVVAPDKEILYEAFDEMEECASKAALIEEGQRMAEMLKSKILGLLQQATKQAQDIQPAMQSSWPKIEQFWARHMWNFISGIQYLAGLSTLPGNPAVASMMAFSAALTSPLPTSTTILLNIMGGWLASQIAPPAGATGFVVSGLVGAAVGSIGLGKILVDVLAGYGAGISGALVAFKIMSGEKPSVEDVVNLLPAILSPGALVVGVICAAILRRHVGQGEGAVQWMNRLIAFASRGNHVAPTHYVAESDASLRVTQVLSSLTITSLLRRLHAWITEDCPVPCSGSWLRDIWEWVCSILTDFKNWLSAKLLPKMPGLPFISCQKGYRGVWAGTGVMTTRCSCGANISGHVRLGTMKITGPKTCLNMWQGTFPINCYTEGPCVPKPPPNYKTAIWRVAASEYVEVTQHGSFSYVTGLTSDNLKVPCQVPAPEFFSWVDGVQIHRFAPTPGPFFRDEVTFTVGLNSLVVGSQLPCDPEPDTEVLASMLTDPSHITAETAARRLARGSPPSQASSSASQLSAPSLKATCTTHKTAYDCDMVDANLFMGGDVTRIESDSKVIVLDSLDSMTEVEDDREPSVPSEYLTRRRKFPPALPPWARPDYNPPVIETWKRPDYEPPTVLGCALPPTPQAPVPPPRRRRARVLTQDNVEGVLREMADKVLSPLQDTNDSGHSTGADTGGDSVQQPSGETAASDAGSLSSMPPLEGEPGDPDLEFEPARSAPPSEGECEVIDSDSKSWSTVSDQEDSVICCSMSYSWTGALITPCGPEEEKLPISPLSNSLMRFHNKVYSTTSRSASLRAKKVTFDRVQVLDAHYDSVLQDVKRAASKVSARLLSVEEACALTPPHSAKSRYGFGAKEVRSLSRGAVNHIRSVWEDLLEDQHTPIDTTAMAKNEVFCIDPAKGGKKPARLIVYPDLGVRVCEKMALYDIAQKLPKAIMGPSYGFQYSPAERVDFLLKAWGSKKDPMGFSYDTRCFDSTVTERDIRTEESIYQACSLPQEARTVIHSITERLYVGGPMTNSKGQSCGYRRCRASGVFTTSMGNTMTCYIKALAACKAAGIVDPTMLVCGDDLVVISESQGNEEDERNLRAFTEAMTRYSAPPGDLPRPEYDLELITSCSSNVSVALDSRGRRRYFLTRDPTTPITRAAWETVRHSPVNSWLGNIIQYAPTIWVRMVIMTHFFSILLAQDTLNQNLNFEMYGAVYSVNPLDLPAIIERLHGLDAFSLHTYSPHELSRVAATLRKLGAPPLRAWKSRARAVRASLIIQGGRAATCGRYLFNWAVKTKLKLTPLPEASRLDLSGWFTVGAGGGDIFHSVSHARPRLLLLCLLLLSVGVGIFLLPAR</sequence>
<dbReference type="EC" id="3.4.22.-" evidence="3"/>
<dbReference type="EC" id="3.4.21.98" evidence="5"/>
<dbReference type="EC" id="3.6.1.15" evidence="5"/>
<dbReference type="EC" id="3.6.4.13" evidence="5"/>
<dbReference type="EC" id="2.7.7.48" evidence="5"/>
<dbReference type="EMBL" id="AB030907">
    <property type="protein sequence ID" value="BAB08107.1"/>
    <property type="molecule type" value="Genomic_RNA"/>
</dbReference>
<dbReference type="SMR" id="Q9DHD6"/>
<dbReference type="DrugCentral" id="Q9DHD6"/>
<dbReference type="MEROPS" id="S29.001"/>
<dbReference type="euHCVdb" id="AB030907"/>
<dbReference type="Proteomes" id="UP000008098">
    <property type="component" value="Segment"/>
</dbReference>
<dbReference type="GO" id="GO:0044167">
    <property type="term" value="C:host cell endoplasmic reticulum membrane"/>
    <property type="evidence" value="ECO:0007669"/>
    <property type="project" value="UniProtKB-SubCell"/>
</dbReference>
<dbReference type="GO" id="GO:0044186">
    <property type="term" value="C:host cell lipid droplet"/>
    <property type="evidence" value="ECO:0007669"/>
    <property type="project" value="UniProtKB-SubCell"/>
</dbReference>
<dbReference type="GO" id="GO:0044191">
    <property type="term" value="C:host cell mitochondrial membrane"/>
    <property type="evidence" value="ECO:0007669"/>
    <property type="project" value="UniProtKB-SubCell"/>
</dbReference>
<dbReference type="GO" id="GO:0042025">
    <property type="term" value="C:host cell nucleus"/>
    <property type="evidence" value="ECO:0007669"/>
    <property type="project" value="UniProtKB-SubCell"/>
</dbReference>
<dbReference type="GO" id="GO:0044220">
    <property type="term" value="C:host cell perinuclear region of cytoplasm"/>
    <property type="evidence" value="ECO:0007669"/>
    <property type="project" value="UniProtKB-SubCell"/>
</dbReference>
<dbReference type="GO" id="GO:0020002">
    <property type="term" value="C:host cell plasma membrane"/>
    <property type="evidence" value="ECO:0007669"/>
    <property type="project" value="UniProtKB-SubCell"/>
</dbReference>
<dbReference type="GO" id="GO:0016020">
    <property type="term" value="C:membrane"/>
    <property type="evidence" value="ECO:0007669"/>
    <property type="project" value="UniProtKB-KW"/>
</dbReference>
<dbReference type="GO" id="GO:1990904">
    <property type="term" value="C:ribonucleoprotein complex"/>
    <property type="evidence" value="ECO:0007669"/>
    <property type="project" value="UniProtKB-KW"/>
</dbReference>
<dbReference type="GO" id="GO:0019031">
    <property type="term" value="C:viral envelope"/>
    <property type="evidence" value="ECO:0007669"/>
    <property type="project" value="UniProtKB-KW"/>
</dbReference>
<dbReference type="GO" id="GO:0019013">
    <property type="term" value="C:viral nucleocapsid"/>
    <property type="evidence" value="ECO:0007669"/>
    <property type="project" value="UniProtKB-KW"/>
</dbReference>
<dbReference type="GO" id="GO:0055036">
    <property type="term" value="C:virion membrane"/>
    <property type="evidence" value="ECO:0007669"/>
    <property type="project" value="UniProtKB-SubCell"/>
</dbReference>
<dbReference type="GO" id="GO:0005524">
    <property type="term" value="F:ATP binding"/>
    <property type="evidence" value="ECO:0007669"/>
    <property type="project" value="UniProtKB-KW"/>
</dbReference>
<dbReference type="GO" id="GO:0016887">
    <property type="term" value="F:ATP hydrolysis activity"/>
    <property type="evidence" value="ECO:0007669"/>
    <property type="project" value="RHEA"/>
</dbReference>
<dbReference type="GO" id="GO:0015267">
    <property type="term" value="F:channel activity"/>
    <property type="evidence" value="ECO:0007669"/>
    <property type="project" value="UniProtKB-KW"/>
</dbReference>
<dbReference type="GO" id="GO:0004197">
    <property type="term" value="F:cysteine-type endopeptidase activity"/>
    <property type="evidence" value="ECO:0007669"/>
    <property type="project" value="InterPro"/>
</dbReference>
<dbReference type="GO" id="GO:0003723">
    <property type="term" value="F:RNA binding"/>
    <property type="evidence" value="ECO:0007669"/>
    <property type="project" value="UniProtKB-KW"/>
</dbReference>
<dbReference type="GO" id="GO:0003724">
    <property type="term" value="F:RNA helicase activity"/>
    <property type="evidence" value="ECO:0007669"/>
    <property type="project" value="UniProtKB-EC"/>
</dbReference>
<dbReference type="GO" id="GO:0003968">
    <property type="term" value="F:RNA-directed RNA polymerase activity"/>
    <property type="evidence" value="ECO:0007669"/>
    <property type="project" value="UniProtKB-KW"/>
</dbReference>
<dbReference type="GO" id="GO:0004252">
    <property type="term" value="F:serine-type endopeptidase activity"/>
    <property type="evidence" value="ECO:0007669"/>
    <property type="project" value="InterPro"/>
</dbReference>
<dbReference type="GO" id="GO:0017124">
    <property type="term" value="F:SH3 domain binding"/>
    <property type="evidence" value="ECO:0007669"/>
    <property type="project" value="UniProtKB-KW"/>
</dbReference>
<dbReference type="GO" id="GO:0005198">
    <property type="term" value="F:structural molecule activity"/>
    <property type="evidence" value="ECO:0007669"/>
    <property type="project" value="InterPro"/>
</dbReference>
<dbReference type="GO" id="GO:0008270">
    <property type="term" value="F:zinc ion binding"/>
    <property type="evidence" value="ECO:0007669"/>
    <property type="project" value="InterPro"/>
</dbReference>
<dbReference type="GO" id="GO:0075512">
    <property type="term" value="P:clathrin-dependent endocytosis of virus by host cell"/>
    <property type="evidence" value="ECO:0007669"/>
    <property type="project" value="UniProtKB-KW"/>
</dbReference>
<dbReference type="GO" id="GO:0039654">
    <property type="term" value="P:fusion of virus membrane with host endosome membrane"/>
    <property type="evidence" value="ECO:0007669"/>
    <property type="project" value="UniProtKB-KW"/>
</dbReference>
<dbReference type="GO" id="GO:0034220">
    <property type="term" value="P:monoatomic ion transmembrane transport"/>
    <property type="evidence" value="ECO:0007669"/>
    <property type="project" value="UniProtKB-KW"/>
</dbReference>
<dbReference type="GO" id="GO:0006508">
    <property type="term" value="P:proteolysis"/>
    <property type="evidence" value="ECO:0007669"/>
    <property type="project" value="UniProtKB-KW"/>
</dbReference>
<dbReference type="GO" id="GO:0039520">
    <property type="term" value="P:symbiont-mediated activation of host autophagy"/>
    <property type="evidence" value="ECO:0007669"/>
    <property type="project" value="UniProtKB-KW"/>
</dbReference>
<dbReference type="GO" id="GO:0039645">
    <property type="term" value="P:symbiont-mediated perturbation of host cell cycle G1/S transition checkpoint"/>
    <property type="evidence" value="ECO:0007669"/>
    <property type="project" value="UniProtKB-KW"/>
</dbReference>
<dbReference type="GO" id="GO:0039545">
    <property type="term" value="P:symbiont-mediated suppression of host cytoplasmic pattern recognition receptor signaling pathway via inhibition of MAVS activity"/>
    <property type="evidence" value="ECO:0007669"/>
    <property type="project" value="UniProtKB-KW"/>
</dbReference>
<dbReference type="GO" id="GO:0039563">
    <property type="term" value="P:symbiont-mediated suppression of host JAK-STAT cascade via inhibition of STAT1 activity"/>
    <property type="evidence" value="ECO:0007669"/>
    <property type="project" value="UniProtKB-KW"/>
</dbReference>
<dbReference type="GO" id="GO:0039527">
    <property type="term" value="P:symbiont-mediated suppression of host TRAF-mediated signal transduction"/>
    <property type="evidence" value="ECO:0007669"/>
    <property type="project" value="UniProtKB-KW"/>
</dbReference>
<dbReference type="GO" id="GO:0039502">
    <property type="term" value="P:symbiont-mediated suppression of host type I interferon-mediated signaling pathway"/>
    <property type="evidence" value="ECO:0007669"/>
    <property type="project" value="UniProtKB-KW"/>
</dbReference>
<dbReference type="GO" id="GO:0019087">
    <property type="term" value="P:symbiont-mediated transformation of host cell"/>
    <property type="evidence" value="ECO:0007669"/>
    <property type="project" value="InterPro"/>
</dbReference>
<dbReference type="GO" id="GO:0039694">
    <property type="term" value="P:viral RNA genome replication"/>
    <property type="evidence" value="ECO:0007669"/>
    <property type="project" value="InterPro"/>
</dbReference>
<dbReference type="GO" id="GO:0019062">
    <property type="term" value="P:virion attachment to host cell"/>
    <property type="evidence" value="ECO:0007669"/>
    <property type="project" value="UniProtKB-KW"/>
</dbReference>
<dbReference type="CDD" id="cd20903">
    <property type="entry name" value="HCV_p7"/>
    <property type="match status" value="1"/>
</dbReference>
<dbReference type="CDD" id="cd23202">
    <property type="entry name" value="Hepacivirus_RdRp"/>
    <property type="match status" value="1"/>
</dbReference>
<dbReference type="FunFam" id="2.30.30.710:FF:000001">
    <property type="entry name" value="Genome polyprotein"/>
    <property type="match status" value="1"/>
</dbReference>
<dbReference type="FunFam" id="3.30.160.890:FF:000001">
    <property type="entry name" value="Genome polyprotein"/>
    <property type="match status" value="1"/>
</dbReference>
<dbReference type="FunFam" id="3.30.70.270:FF:000015">
    <property type="entry name" value="Genome polyprotein"/>
    <property type="match status" value="1"/>
</dbReference>
<dbReference type="FunFam" id="3.40.50.300:FF:000557">
    <property type="entry name" value="Genome polyprotein"/>
    <property type="match status" value="1"/>
</dbReference>
<dbReference type="FunFam" id="3.40.50.300:FF:000717">
    <property type="entry name" value="Genome polyprotein"/>
    <property type="match status" value="1"/>
</dbReference>
<dbReference type="FunFam" id="4.10.710.10:FF:000001">
    <property type="entry name" value="Genome polyprotein"/>
    <property type="match status" value="1"/>
</dbReference>
<dbReference type="Gene3D" id="2.40.10.120">
    <property type="match status" value="1"/>
</dbReference>
<dbReference type="Gene3D" id="3.30.70.270">
    <property type="match status" value="2"/>
</dbReference>
<dbReference type="Gene3D" id="6.10.250.1610">
    <property type="match status" value="1"/>
</dbReference>
<dbReference type="Gene3D" id="6.10.250.1750">
    <property type="match status" value="1"/>
</dbReference>
<dbReference type="Gene3D" id="6.10.250.2920">
    <property type="match status" value="1"/>
</dbReference>
<dbReference type="Gene3D" id="2.20.25.210">
    <property type="entry name" value="Hepatitis C NS5A, domain 1B"/>
    <property type="match status" value="1"/>
</dbReference>
<dbReference type="Gene3D" id="4.10.710.10">
    <property type="entry name" value="Hepatitis C Virus Capsid Protein, Chain A"/>
    <property type="match status" value="1"/>
</dbReference>
<dbReference type="Gene3D" id="3.30.160.890">
    <property type="entry name" value="Hepatitis C virus envelope glycoprotein E1, chain C"/>
    <property type="match status" value="1"/>
</dbReference>
<dbReference type="Gene3D" id="2.30.30.710">
    <property type="entry name" value="Hepatitis C virus non-structural protein NS2, C-terminal domain"/>
    <property type="match status" value="1"/>
</dbReference>
<dbReference type="Gene3D" id="1.20.1280.150">
    <property type="entry name" value="Hepatitis C virus non-structural protein NS2, N-terminal domain"/>
    <property type="match status" value="1"/>
</dbReference>
<dbReference type="Gene3D" id="2.20.25.220">
    <property type="entry name" value="Hepatitis C virus NS5A, 1B domain"/>
    <property type="match status" value="1"/>
</dbReference>
<dbReference type="Gene3D" id="3.40.50.300">
    <property type="entry name" value="P-loop containing nucleotide triphosphate hydrolases"/>
    <property type="match status" value="2"/>
</dbReference>
<dbReference type="Gene3D" id="1.10.820.10">
    <property type="entry name" value="RNA Helicase Chain A , domain 3"/>
    <property type="match status" value="1"/>
</dbReference>
<dbReference type="Gene3D" id="2.40.10.10">
    <property type="entry name" value="Trypsin-like serine proteases"/>
    <property type="match status" value="1"/>
</dbReference>
<dbReference type="InterPro" id="IPR043502">
    <property type="entry name" value="DNA/RNA_pol_sf"/>
</dbReference>
<dbReference type="InterPro" id="IPR011492">
    <property type="entry name" value="Flavi_DEAD"/>
</dbReference>
<dbReference type="InterPro" id="IPR002521">
    <property type="entry name" value="HCV_Core_C"/>
</dbReference>
<dbReference type="InterPro" id="IPR044896">
    <property type="entry name" value="HCV_core_chain_A"/>
</dbReference>
<dbReference type="InterPro" id="IPR002522">
    <property type="entry name" value="HCV_core_N"/>
</dbReference>
<dbReference type="InterPro" id="IPR002519">
    <property type="entry name" value="HCV_Env"/>
</dbReference>
<dbReference type="InterPro" id="IPR002531">
    <property type="entry name" value="HCV_NS1"/>
</dbReference>
<dbReference type="InterPro" id="IPR002518">
    <property type="entry name" value="HCV_NS2"/>
</dbReference>
<dbReference type="InterPro" id="IPR042205">
    <property type="entry name" value="HCV_NS2_C"/>
</dbReference>
<dbReference type="InterPro" id="IPR042209">
    <property type="entry name" value="HCV_NS2_N"/>
</dbReference>
<dbReference type="InterPro" id="IPR000745">
    <property type="entry name" value="HCV_NS4a"/>
</dbReference>
<dbReference type="InterPro" id="IPR001490">
    <property type="entry name" value="HCV_NS4b"/>
</dbReference>
<dbReference type="InterPro" id="IPR002868">
    <property type="entry name" value="HCV_NS5a"/>
</dbReference>
<dbReference type="InterPro" id="IPR013192">
    <property type="entry name" value="HCV_NS5A_1a"/>
</dbReference>
<dbReference type="InterPro" id="IPR013193">
    <property type="entry name" value="HCV_NS5a_1B_dom"/>
</dbReference>
<dbReference type="InterPro" id="IPR038568">
    <property type="entry name" value="HCV_NS5A_1B_sf"/>
</dbReference>
<dbReference type="InterPro" id="IPR024350">
    <property type="entry name" value="HCV_NS5a_C"/>
</dbReference>
<dbReference type="InterPro" id="IPR049913">
    <property type="entry name" value="HCV_p7"/>
</dbReference>
<dbReference type="InterPro" id="IPR014001">
    <property type="entry name" value="Helicase_ATP-bd"/>
</dbReference>
<dbReference type="InterPro" id="IPR001650">
    <property type="entry name" value="Helicase_C-like"/>
</dbReference>
<dbReference type="InterPro" id="IPR004109">
    <property type="entry name" value="HepC_NS3_protease"/>
</dbReference>
<dbReference type="InterPro" id="IPR054175">
    <property type="entry name" value="NS3_helicase_C"/>
</dbReference>
<dbReference type="InterPro" id="IPR038170">
    <property type="entry name" value="NS5A_1a_sf"/>
</dbReference>
<dbReference type="InterPro" id="IPR027417">
    <property type="entry name" value="P-loop_NTPase"/>
</dbReference>
<dbReference type="InterPro" id="IPR009003">
    <property type="entry name" value="Peptidase_S1_PA"/>
</dbReference>
<dbReference type="InterPro" id="IPR043504">
    <property type="entry name" value="Peptidase_S1_PA_chymotrypsin"/>
</dbReference>
<dbReference type="InterPro" id="IPR043128">
    <property type="entry name" value="Rev_trsase/Diguanyl_cyclase"/>
</dbReference>
<dbReference type="InterPro" id="IPR007094">
    <property type="entry name" value="RNA-dir_pol_PSvirus"/>
</dbReference>
<dbReference type="InterPro" id="IPR002166">
    <property type="entry name" value="RNA_pol_HCV"/>
</dbReference>
<dbReference type="Pfam" id="PF07652">
    <property type="entry name" value="Flavi_DEAD"/>
    <property type="match status" value="1"/>
</dbReference>
<dbReference type="Pfam" id="PF01543">
    <property type="entry name" value="HCV_capsid"/>
    <property type="match status" value="1"/>
</dbReference>
<dbReference type="Pfam" id="PF01542">
    <property type="entry name" value="HCV_core"/>
    <property type="match status" value="1"/>
</dbReference>
<dbReference type="Pfam" id="PF01539">
    <property type="entry name" value="HCV_env"/>
    <property type="match status" value="1"/>
</dbReference>
<dbReference type="Pfam" id="PF01560">
    <property type="entry name" value="HCV_NS1"/>
    <property type="match status" value="1"/>
</dbReference>
<dbReference type="Pfam" id="PF01538">
    <property type="entry name" value="HCV_NS2"/>
    <property type="match status" value="1"/>
</dbReference>
<dbReference type="Pfam" id="PF01006">
    <property type="entry name" value="HCV_NS4a"/>
    <property type="match status" value="1"/>
</dbReference>
<dbReference type="Pfam" id="PF01001">
    <property type="entry name" value="HCV_NS4b"/>
    <property type="match status" value="1"/>
</dbReference>
<dbReference type="Pfam" id="PF01506">
    <property type="entry name" value="HCV_NS5a"/>
    <property type="match status" value="1"/>
</dbReference>
<dbReference type="Pfam" id="PF08300">
    <property type="entry name" value="HCV_NS5a_1a"/>
    <property type="match status" value="1"/>
</dbReference>
<dbReference type="Pfam" id="PF08301">
    <property type="entry name" value="HCV_NS5a_1b"/>
    <property type="match status" value="1"/>
</dbReference>
<dbReference type="Pfam" id="PF12941">
    <property type="entry name" value="HCV_NS5a_C"/>
    <property type="match status" value="1"/>
</dbReference>
<dbReference type="Pfam" id="PF22027">
    <property type="entry name" value="NS3_helicase_C"/>
    <property type="match status" value="1"/>
</dbReference>
<dbReference type="Pfam" id="PF02907">
    <property type="entry name" value="Peptidase_S29"/>
    <property type="match status" value="1"/>
</dbReference>
<dbReference type="Pfam" id="PF00998">
    <property type="entry name" value="RdRP_3"/>
    <property type="match status" value="1"/>
</dbReference>
<dbReference type="SMART" id="SM00487">
    <property type="entry name" value="DEXDc"/>
    <property type="match status" value="1"/>
</dbReference>
<dbReference type="SUPFAM" id="SSF56672">
    <property type="entry name" value="DNA/RNA polymerases"/>
    <property type="match status" value="1"/>
</dbReference>
<dbReference type="SUPFAM" id="SSF52540">
    <property type="entry name" value="P-loop containing nucleoside triphosphate hydrolases"/>
    <property type="match status" value="2"/>
</dbReference>
<dbReference type="SUPFAM" id="SSF50494">
    <property type="entry name" value="Trypsin-like serine proteases"/>
    <property type="match status" value="1"/>
</dbReference>
<dbReference type="PROSITE" id="PS51693">
    <property type="entry name" value="HCV_NS2_PRO"/>
    <property type="match status" value="1"/>
</dbReference>
<dbReference type="PROSITE" id="PS51192">
    <property type="entry name" value="HELICASE_ATP_BIND_1"/>
    <property type="match status" value="1"/>
</dbReference>
<dbReference type="PROSITE" id="PS51194">
    <property type="entry name" value="HELICASE_CTER"/>
    <property type="match status" value="1"/>
</dbReference>
<dbReference type="PROSITE" id="PS51822">
    <property type="entry name" value="HV_PV_NS3_PRO"/>
    <property type="match status" value="1"/>
</dbReference>
<dbReference type="PROSITE" id="PS50507">
    <property type="entry name" value="RDRP_SSRNA_POS"/>
    <property type="match status" value="1"/>
</dbReference>
<comment type="function">
    <molecule>Mature core protein</molecule>
    <text evidence="2 4 5 6 11 19">Packages viral RNA to form a viral nucleocapsid, and promotes virion budding (Probable). Participates in the viral particle production as a result of its interaction with the non-structural protein 5A (By similarity). Binds RNA and may function as a RNA chaperone to induce the RNA structural rearrangements taking place during virus replication (By similarity). Modulates viral translation initiation by interacting with viral IRES and 40S ribosomal subunit (By similarity). Affects various cell signaling pathways, host immunity and lipid metabolism (Probable). Prevents the establishment of cellular antiviral state by blocking the interferon-alpha/beta (IFN-alpha/beta) and IFN-gamma signaling pathways and by blocking the formation of phosphorylated STAT1 and promoting ubiquitin-mediated proteasome-dependent degradation of STAT1 (By similarity). Activates STAT3 leading to cellular transformation (By similarity). Regulates the activity of cellular genes, including c-myc and c-fos (By similarity). May repress the promoter of p53, and sequester CREB3 and SP110 isoform 3/Sp110b in the cytoplasm (By similarity). Represses cell cycle negative regulating factor CDKN1A, thereby interrupting an important check point of normal cell cycle regulation (By similarity). Targets transcription factors involved in the regulation of inflammatory responses and in the immune response: suppresses TNF-induced NF-kappa-B activation, and activates AP-1 (By similarity). Binds to dendritic cells (DCs) via C1QR1, resulting in down-regulation of T-lymphocytes proliferation (By similarity). Alters lipid metabolism by interacting with hepatocellular proteins involved in lipid accumulation and storage (By similarity). Induces up-regulation of FAS promoter activity, and thereby contributes to the increased triglyceride accumulation in hepatocytes (steatosis) (By similarity).</text>
</comment>
<comment type="function">
    <molecule>Envelope glycoprotein E1</molecule>
    <text evidence="5">Forms a heterodimer with envelope glycoprotein E2, which mediates virus attachment to the host cell, virion internalization through clathrin-dependent endocytosis and fusion with host membrane (By similarity). Fusion with the host cell is most likely mediated by both E1 and E2, through conformational rearrangements of the heterodimer required for fusion rather than a classical class II fusion mechanism (By similarity). E1/E2 heterodimer binds host apolipoproteins such as APOB and ApoE thereby forming a lipo-viro-particle (LVP) (By similarity). APOE associated to the LVP allows the initial virus attachment to cell surface receptors such as the heparan sulfate proteoglycans (HSPGs), syndecan-1 (SDC1), syndecan-1 (SDC2), the low-density lipoprotein receptor (LDLR) and scavenger receptor class B type I (SCARB1) (By similarity). The cholesterol transfer activity of SCARB1 allows E2 exposure and binding of E2 to SCARB1 and the tetraspanin CD81 (By similarity). E1/E2 heterodimer binding on CD81 activates the epithelial growth factor receptor (EGFR) signaling pathway (By similarity). Diffusion of the complex E1-E2-EGFR-SCARB1-CD81 to the cell lateral membrane allows further interaction with Claudin 1 (CLDN1) and occludin (OCLN) to finally trigger HCV entry (By similarity).</text>
</comment>
<comment type="function">
    <molecule>Envelope glycoprotein E2</molecule>
    <text evidence="4 5">Forms a heterodimer with envelope glycoprotein E1, which mediates virus attachment to the host cell, virion internalization through clathrin-dependent endocytosis and fusion with host membrane (By similarity). Fusion with the host cell is most likely mediated by both E1 and E2, through conformational rearrangements of the heterodimer required for fusion rather than a classical class II fusion mechanism (By similarity). The interaction between envelope glycoprotein E2 and host apolipoprotein E/APOE allows the proper assembly, maturation and infectivity of the viral particles (By similarity). This interaction is probably promoted via the up-regulation of cellular autophagy by the virus (By similarity). E1/E2 heterodimer binds host apolipoproteins such as APOB and APOE thereby forming a lipo-viro-particle (LVP) (By similarity). APOE associated to the LVP allows the initial virus attachment to cell surface receptors such as the heparan sulfate proteoglycans (HSPGs), syndecan-1 (SDC1), syndecan-1 (SDC2), the low-density lipoprotein receptor (LDLR) and scavenger receptor class B type I (SCARB1) (By similarity). The cholesterol transfer activity of SCARB1 allows E2 exposure and binding of E2 to SCARB1 and the tetraspanin CD81 (By similarity). E1/E2 heterodimer binding on CD81 activates the epithelial growth factor receptor (EGFR) signaling pathway (By similarity). Diffusion of the complex E1-E2-EGFR-SCARB1-CD81 to the cell lateral membrane allows further interaction with Claudin 1 (CLDN1) and occludin (OCLN) to finally trigger HCV entry (By similarity). Inhibits host EIF2AK2/PKR activation, preventing the establishment of an antiviral state (By similarity). Viral ligand for CD209/DC-SIGN and CLEC4M/DC-SIGNR, which are respectively found on dendritic cells (DCs), and on liver sinusoidal endothelial cells and macrophage-like cells of lymph node sinuses (By similarity). These interactions allow the capture of circulating HCV particles by these cells and subsequent facilitated transmission to permissive cells such as hepatocytes and lymphocyte subpopulations (By similarity). The interaction between E2 and host amino acid transporter complex formed by SLC3A2 and SLC7A5/LAT1 may facilitate viral entry into host cell (By similarity).</text>
</comment>
<comment type="function">
    <molecule>Viroporin p7</molecule>
    <text evidence="5 11 19">Ion channel protein that acts as a viroporin and plays an essential role in the assembly, envelopment and secretion of viral particles (By similarity). Regulates the host cell secretory pathway, which induces the intracellular retention of viral glycoproteins and favors assembly of viral particles (By similarity). Creates a pore in acidic organelles and releases Ca(2+) and H(+) in the cytoplasm of infected cells, leading to a productive viral infection (By similarity). High levels of cytoplasmic Ca(2+) may trigger membrane trafficking and transport of viral ER-associated proteins to viroplasms, sites of viral genome replication (Probable). This ionic imbalance induces the assembly of the inflammasome complex, which triggers the maturation of pro-IL-1beta into IL-1beta through the action of caspase-1 (By similarity). Targets also host mitochondria and induces mitochondrial depolarization (By similarity). In addition of its role as a viroporin, acts as a lipid raft adhesion factor (By similarity).</text>
</comment>
<comment type="function">
    <molecule>Protease NS2</molecule>
    <text evidence="3 5">Cysteine protease required for the proteolytic auto-cleavage between the non-structural proteins NS2 and NS3 (By similarity). The N-terminus of NS3 is required for the function of NS2 protease (active region NS2-3) (By similarity). Promotes the initiation of viral particle assembly by mediating the interaction between structural and non-structural proteins (By similarity).</text>
</comment>
<comment type="function">
    <molecule>Serine protease/helicase NS3</molecule>
    <text evidence="5 12">Displays three enzymatic activities: serine protease with a chymotrypsin-like fold, NTPase and RNA helicase (By similarity). NS3 serine protease, in association with NS4A, is responsible for the cleavages of NS3-NS4A, NS4A-NS4B, NS4B-NS5A and NS5A-NS5B (By similarity). The NS3/NS4A complex prevents phosphorylation of host IRF3, thus preventing the establishment of dsRNA induced antiviral state (By similarity). The NS3/NS4A complex induces host amino acid transporter component SLC3A2, thus contributing to HCV propagation (By similarity). NS3 RNA helicase binds to RNA and unwinds both dsDNA and dsRNA in the 3' to 5' direction, and likely resolves RNA complicated stable secondary structures in the template strand (By similarity). Binds a single ATP and catalyzes the unzipping of a single base pair of dsRNA (By similarity). Inhibits host antiviral proteins TBK1 and IRF3 thereby preventing the establishment of an antiviral state (By similarity). Cleaves host MAVS/CARDIF thereby preventing the establishment of an antiviral state (By similarity). Cleaves host TICAM1/TRIF, thereby disrupting TLR3 signaling and preventing the establishment of an antiviral state (By similarity).</text>
</comment>
<comment type="function">
    <molecule>Non-structural protein 4B</molecule>
    <text evidence="5">Induces a specific membrane alteration that serves as a scaffold for the virus replication complex (By similarity). This membrane alteration gives rise to the so-called ER-derived membranous web that contains the replication complex (By similarity). NS4B self-interaction contributes to its function in membranous web formation (By similarity). Promotes host TRIF protein degradation in a CASP8-dependent manner thereby inhibiting host TLR3-mediated interferon signaling (By similarity). Disrupts the interaction between STING and TBK1 contributing to the inhibition of interferon signaling (By similarity).</text>
</comment>
<comment type="function">
    <molecule>Non-structural protein 5A</molecule>
    <text evidence="2 4 5 11 12">Phosphorylated protein that is indispensable for viral replication and assembly (By similarity). Both hypo- and hyperphosphorylated states are required for the viral life cycle (By similarity). The hyperphosphorylated form of NS5A is an inhibitor of viral replication (By similarity). Involved in RNA-binding and especially in binding to the viral genome (By similarity). Zinc is essential for RNA-binding (By similarity). Participates in the viral particle production as a result of its interaction with the mature viral core protein (By similarity). Its interaction with host VAPB may target the viral replication complex to vesicles (By similarity). Down-regulates viral IRES translation initiation (By similarity). Mediates interferon resistance, presumably by interacting with and inhibiting host EIF2AK2/PKR (By similarity). Prevents BIN1-induced apoptosis (By similarity). Acts as a transcriptional activator of some host genes important for viral replication when localized in the nucleus (By similarity). Via the interaction with host PACSIN2, modulates lipid droplet formation in order to promote virion assembly (By similarity). Modulates TNFRSF21/DR6 signaling pathway for viral propagation (By similarity).</text>
</comment>
<comment type="function">
    <molecule>RNA-directed RNA polymerase</molecule>
    <text evidence="5">RNA-dependent RNA polymerase that performs primer-template recognition and RNA synthesis during viral replication. Initiates RNA transcription/replication at a flavin adenine dinucleotide (FAD), resulting in a 5'- FAD cap on viral RNAs. In this way, recognition of viral 5' RNA by host pattern recognition receptors can be bypassed, thereby evading activation of antiviral pathways.</text>
</comment>
<comment type="catalytic activity">
    <molecule>Serine protease/helicase NS3</molecule>
    <reaction evidence="5">
        <text>Hydrolysis of four peptide bonds in the viral precursor polyprotein, commonly with Asp or Glu in the P6 position, Cys or Thr in P1 and Ser or Ala in P1'.</text>
        <dbReference type="EC" id="3.4.21.98"/>
    </reaction>
</comment>
<comment type="catalytic activity">
    <molecule>Serine protease/helicase NS3</molecule>
    <reaction evidence="5">
        <text>a ribonucleoside 5'-triphosphate + H2O = a ribonucleoside 5'-diphosphate + phosphate + H(+)</text>
        <dbReference type="Rhea" id="RHEA:23680"/>
        <dbReference type="ChEBI" id="CHEBI:15377"/>
        <dbReference type="ChEBI" id="CHEBI:15378"/>
        <dbReference type="ChEBI" id="CHEBI:43474"/>
        <dbReference type="ChEBI" id="CHEBI:57930"/>
        <dbReference type="ChEBI" id="CHEBI:61557"/>
        <dbReference type="EC" id="3.6.1.15"/>
    </reaction>
</comment>
<comment type="catalytic activity">
    <molecule>Serine protease/helicase NS3</molecule>
    <reaction evidence="5">
        <text>ATP + H2O = ADP + phosphate + H(+)</text>
        <dbReference type="Rhea" id="RHEA:13065"/>
        <dbReference type="ChEBI" id="CHEBI:15377"/>
        <dbReference type="ChEBI" id="CHEBI:15378"/>
        <dbReference type="ChEBI" id="CHEBI:30616"/>
        <dbReference type="ChEBI" id="CHEBI:43474"/>
        <dbReference type="ChEBI" id="CHEBI:456216"/>
        <dbReference type="EC" id="3.6.4.13"/>
    </reaction>
</comment>
<comment type="catalytic activity">
    <molecule>RNA-directed RNA polymerase</molecule>
    <reaction evidence="14">
        <text>RNA(n) + a ribonucleoside 5'-triphosphate = RNA(n+1) + diphosphate</text>
        <dbReference type="Rhea" id="RHEA:21248"/>
        <dbReference type="Rhea" id="RHEA-COMP:14527"/>
        <dbReference type="Rhea" id="RHEA-COMP:17342"/>
        <dbReference type="ChEBI" id="CHEBI:33019"/>
        <dbReference type="ChEBI" id="CHEBI:61557"/>
        <dbReference type="ChEBI" id="CHEBI:140395"/>
        <dbReference type="EC" id="2.7.7.48"/>
    </reaction>
</comment>
<comment type="cofactor">
    <molecule>Protease NS2</molecule>
    <cofactor evidence="3">
        <name>Zn(2+)</name>
        <dbReference type="ChEBI" id="CHEBI:29105"/>
    </cofactor>
    <text evidence="3">Activity of protease NS2 is dependent on zinc ions and completely inhibited by EDTA. This is probably due to the fact that NS2 protease activity needs NS3 N-terminus that binds a zinc atom (active region NS2-3).</text>
</comment>
<comment type="cofactor">
    <molecule>Serine protease/helicase NS3</molecule>
    <cofactor evidence="3">
        <name>Zn(2+)</name>
        <dbReference type="ChEBI" id="CHEBI:29105"/>
    </cofactor>
    <cofactor evidence="12">
        <name>Mg(2+)</name>
        <dbReference type="ChEBI" id="CHEBI:18420"/>
    </cofactor>
    <text evidence="3 12">Binds 1 zinc ion, which has a structural role (By similarity). The magnesium ion is essential for the helicase activity (By similarity).</text>
</comment>
<comment type="cofactor">
    <molecule>RNA-directed RNA polymerase</molecule>
    <cofactor evidence="3">
        <name>Mg(2+)</name>
        <dbReference type="ChEBI" id="CHEBI:18420"/>
    </cofactor>
    <text evidence="3">Binds 2 magnesium ion that constitute a dinuclear catalytic metal center.</text>
</comment>
<comment type="activity regulation">
    <molecule>Viroporin p7</molecule>
    <text evidence="2 5">Inhibited by the antiviral drug hexamethylene amiloride (By similarity). Inhibition by amantadine appears to be genotype-dependent (By similarity). Also inhibited by long-alkyl-chain iminosugar derivatives (By similarity).</text>
</comment>
<comment type="activity regulation">
    <molecule>RNA-directed RNA polymerase</molecule>
    <text evidence="5">Activity is up-regulated by PRK2/PKN2-mediated phosphorylation.</text>
</comment>
<comment type="subunit">
    <molecule>Mature core protein</molecule>
    <text evidence="2 4 5 6 8 9 11">Homooligomer (By similarity). Interacts with E1 (via C-terminus) (By similarity). Interacts with the non-structural protein 5A (By similarity). Interacts (via N-terminus) with host STAT1 (via SH2 domain); this interaction results in decreased STAT1 phosphorylation and ubiquitin-mediated proteasome-dependent STAT1 degradation, leading to decreased IFN-stimulated gene transcription (By similarity). Interacts with host STAT3; this interaction constitutively activates STAT3 (By similarity). Interacts with host LTBR receptor (By similarity). Interacts with host TNFRSF1A receptor and possibly induces apoptosis (By similarity). Interacts with host HNRPK (By similarity). Interacts with host YWHAE (By similarity). Interacts with host UBE3A/E6AP (By similarity). Interacts with host DDX3X (By similarity). Interacts with host APOA2 (By similarity). Interacts with host RXRA protein (By similarity). Interacts with host SP110 isoform 3/Sp110b; this interaction sequesters the transcriptional corepressor SP110 away from the nucleus (By similarity). Interacts with host CREB3 nuclear transcription protein; this interaction triggers cell transformation (By similarity). Interacts with host ACY3 (By similarity). Interacts with host C1QR1 (By similarity). Interacts with host RBM24; this interaction, which enhances the interaction of the mature core protein with 5'-UTR, may inhibit viral translation and favor replication (By similarity). Interacts with host EIF2AK2/PKR; this interaction induces the autophosphorylation of EIF2AK2 (By similarity). Part of the viral assembly initiation complex composed of NS2, E1, E2, NS3, NS4A, NS5A and the mature core protein (By similarity).</text>
</comment>
<comment type="subunit">
    <molecule>Envelope glycoprotein E1</molecule>
    <text evidence="5 11">Forms a heterodimer with envelope glycoprotein E2 (By similarity). Interacts with mature core protein (By similarity). Interacts with protease NS2 (By similarity). The heterodimer E1/E2 interacts with host CLDN1; this interaction plays a role in viral entry into host cell (By similarity). Interacts with host SPSB2 (via C-terminus) (By similarity). Part of the viral assembly initiation complex composed of NS2, E1, E2, NS3, NS4A, NS5A and the mature core protein (By similarity). Interacts with host NEURL3; this interaction prevents E1 binding to glycoprotein E2 (By similarity).</text>
</comment>
<comment type="subunit">
    <molecule>Envelope glycoprotein E2</molecule>
    <text evidence="5 11 12">Forms a heterodimer with envelope glycoprotein E1 (By similarity). Interacts with host CD81 and SCARB1 receptors; these interactions play a role in viral entry into host cell (By similarity). Interacts with host EIF2AK2/PKR; this interaction inhibits EIF2AK2 and probably allows the virus to evade the innate immune response (By similarity). Interacts with host CD209/DC-SIGN and CLEC4M/DC-SIGNR (By similarity). Interact with host SPCS1; this interaction is essential for viral particle assembly (By similarity). Interacts with protease NS2 (By similarity). The heterodimer E1/E2 interacts with host CLDN1; this interaction plays a role in viral entry into host cell (By similarity). Part of the viral assembly initiation complex composed of NS2, E1, E2, NS3, NS4A, NS5A and the mature core protein (By similarity). Interacts with host SLC3A2/4F2hc; the interaction may facilitate viral entry into host cell (By similarity). Interacts with human PLSCR1 (By similarity).</text>
</comment>
<comment type="subunit">
    <molecule>Viroporin p7</molecule>
    <text evidence="1 5 11">Homohexamer (By similarity). Homoheptamer (By similarity). Interacts with protease NS2 (By similarity).</text>
</comment>
<comment type="subunit">
    <molecule>Protease NS2</molecule>
    <text evidence="5 11">Homodimer (By similarity). Interacts with host SPCS1; this interaction is essential for viral particle assembly (By similarity). Interacts with envelope glycoprotein E1 (By similarity). Interacts with envelope glycoprotein E2 (By similarity). Interacts with viroporin p7 (By similarity). Interacts with serine protease/helicase NS3 (By similarity). Part of the replication complex composed of NS2, NS3, NS4A, NS4B, NS5A and the RNA-directed RNA polymerase embedded in an ER-derived membranous web (By similarity). Part of the viral assembly initiation complex composed of NS2, E1, E2, NS3, NS4A, NS5A and the mature core protein (By similarity).</text>
</comment>
<comment type="subunit">
    <molecule>Serine protease/helicase NS3</molecule>
    <text evidence="3 5 11 12">Interacts with protease NS2 (By similarity). Interacts with non-structural protein 4A; this interaction stabilizes the folding of NS3 serine protease (By similarity). NS3-NS4A interaction is essential for NS3 activation and allows membrane anchorage of the latter (By similarity). NS3/NS4A complex also prevents phosphorylation of host IRF3, thus preventing the establishment of dsRNA induced antiviral state (By similarity). Interacts with host MAVS; this interaction leads to the cleavage and inhibition of host MAVS (By similarity). Interacts with host TICAM1; this interaction leads to the cleavage and inhibition of host TICAM1 (By similarity). Interacts with host TANK-binding kinase/TBK1; this interaction results in the inhibition of the association between TBK1 and IRF3, which leads to the inhibition of IRF3 activation (By similarity). Interacts with host RBM24 (By similarity). Part of the replication complex composed of NS2, NS3, NS4A, NS4B, NS5A and the RNA-directed RNA polymerase embedded in an ER-derived membranous web (By similarity). Part of the viral assembly initiation complex composed of NS2, E1, E2, NS3, NS4A, NS5A and the mature core protein (By similarity).</text>
</comment>
<comment type="subunit">
    <molecule>Non-structural protein 4A</molecule>
    <text evidence="2 3 5 11">Interacts with NS3 serine protease; this interaction stabilizes the folding of NS3 serine protease (By similarity). NS3-NS4A interaction is essential for NS3 activation and allows membrane anchorage of the latter (By similarity). Interacts with non-structural protein 5A (via N-terminus) (By similarity). Part of the replication complex composed of NS2, NS3, NS4A, NS4B, NS5A and the RNA-directed RNA polymerase embedded in an ER-derived membranous web (By similarity). Part of the viral assembly initiation complex composed of NS2, E1, E2, NS3, NS4A, NS5A and the mature core protein (By similarity).</text>
</comment>
<comment type="subunit">
    <molecule>Non-structural protein 4B</molecule>
    <text evidence="5 11">Homomultimer (By similarity). Interacts with non-structural protein NS5A (By similarity). Interacts with host PLA2G4C; this interaction likely initiates the recruitment of replication complexes to lipid droplets (By similarity). Interacts with host STING; this interaction disrupts the interaction between STING and TBK1 thereby suppressing the interferon signaling (By similarity). Part of the replication complex composed of NS2, NS3, NS4A, NS4B, NS5A and the RNA-directed RNA polymerase embedded in an ER-derived membranous web (By similarity).</text>
</comment>
<comment type="subunit">
    <molecule>Non-structural protein 5A</molecule>
    <text evidence="2 3 4 5 11">Monomer. Homodimer; dimerization is required for RNA-binding (By similarity). Interacts with the mature core protein (By similarity). Interacts (via N-terminus) with non-structural protein 4A (By similarity). Interacts with non-structural protein 4B. Interacts (via region D2) with RNA-directed RNA polymerase (By similarity). Part of the viral assembly initiation complex composed of NS2, E1, E2, NS3, NS4A, NS5A and the mature core protein (By similarity). Part of the replication complex composed of NS2, NS3, NS4A, NS4B, NS5A and the RNA-directed RNA polymerase embedded in an ER-derived membranous web (By similarity). Interacts with host GRB2 (By similarity). Interacts with host BIN1 (By similarity). Interacts with host PIK3R1 (By similarity). Interacts with host SRCAP (By similarity). Interacts with host FKBP8 (By similarity). Interacts (via C-terminus) with host VAPB (via MSP domain). Interacts with host EIF2AK2/PKR; this interaction leads to disruption of EIF2AK2 dimerization by NS5A and probably allows the virus to evade the innate immune response. Interacts (via N-terminus) with host PACSIN2 (via N-terminus); this interaction attenuates protein kinase C alpha-mediated phosphorylation of PACSIN2 by disrupting the interaction between PACSIN2 and PRKCA (By similarity). Interacts (via N-terminus) with host SRC kinase (via SH2 domain) (By similarity). Interacts with most Src-family kinases (By similarity). Interacts with host IFI27 and SKP2; promotes the ubiquitin-mediated proteasomal degradation of NS5A (By similarity). Interacts with host GPS2 (By similarity). Interacts with host TNFRSF21; this interaction allows the modulation by the virus of JNK, p38 MAPK, STAT3, and Akt signaling pathways in a DR6-dependent manner. Interacts (via N-terminus) with host CIDEB (via N-terminus); this interaction seems to regulate the association of HCV particles with APOE (By similarity). Interacts with host CHKA/Choline Kinase-alpha; CHKA bridges host PI4KA and NS5A and potentiates NS5A-stimulated PI4KA activity, which then facilitates the targeting of the ternary complex to the ER for viral replication (By similarity). Interacts with host SPSB2 (via C-terminus); this interaction targets NS5A for ubiquitination and degradation (By similarity). Interacts with host RAB18; this interaction may promote the association of NS5A and other replicase components with lipid droplets (By similarity). Interacts (via region D2) with host PPIA/CYPA; the interaction stimulates RNA-binding ability of NS5A and is dependent on the peptidyl-prolyl cis-trans isomerase activity of PPIA/CYPA. Interacts with host TRIM14; this interaction induces the degradation of NS5A (By similarity).</text>
</comment>
<comment type="subunit">
    <molecule>RNA-directed RNA polymerase</molecule>
    <text evidence="5">Homooligomer (By similarity). Interacts with non-structural protein 5A (By similarity). Interacts with host VAPB (By similarity). Interacts with host PRK2/PKN2 (By similarity). Interacts with host HNRNPA1 and SEPT6; these interactions facilitate viral replication (By similarity). Part of the replication complex composed of NS2, NS3, NS4A, NS4B, NS5A and the RNA-directed RNA polymerase (By similarity).</text>
</comment>
<comment type="subcellular location">
    <molecule>Core protein precursor</molecule>
    <subcellularLocation>
        <location evidence="4">Host endoplasmic reticulum membrane</location>
        <topology evidence="13">Single-pass membrane protein</topology>
    </subcellularLocation>
    <subcellularLocation>
        <location evidence="4">Host mitochondrion membrane</location>
        <topology evidence="13">Single-pass type I membrane protein</topology>
    </subcellularLocation>
    <text>The C-terminal transmembrane domain of the core protein precursor contains an ER signal leading the nascent polyprotein to the ER membrane.</text>
</comment>
<comment type="subcellular location">
    <molecule>Mature core protein</molecule>
    <subcellularLocation>
        <location evidence="11">Virion</location>
    </subcellularLocation>
    <subcellularLocation>
        <location evidence="11">Host cytoplasm</location>
    </subcellularLocation>
    <subcellularLocation>
        <location evidence="2">Host nucleus</location>
    </subcellularLocation>
    <subcellularLocation>
        <location evidence="11">Host lipid droplet</location>
    </subcellularLocation>
    <text evidence="5">Only a minor proportion of core protein is present in the nucleus (By similarity). Probably present on the surface of lipid droplets (By similarity).</text>
</comment>
<comment type="subcellular location">
    <molecule>Envelope glycoprotein E1</molecule>
    <subcellularLocation>
        <location evidence="19">Virion membrane</location>
        <topology evidence="19">Single-pass type I membrane protein</topology>
    </subcellularLocation>
    <subcellularLocation>
        <location>Host endoplasmic reticulum membrane</location>
        <topology evidence="5">Single-pass type I membrane protein</topology>
    </subcellularLocation>
    <text evidence="5">The C-terminal transmembrane domain acts as a signal sequence and forms a hairpin structure before cleavage by host signal peptidase (By similarity). After cleavage, the membrane sequence is retained at the C-terminus of the protein, serving as ER membrane anchor (By similarity). A reorientation of the second hydrophobic stretch occurs after cleavage producing a single reoriented transmembrane domain (By similarity). These events explain the final topology of the protein (By similarity).</text>
</comment>
<comment type="subcellular location">
    <molecule>Envelope glycoprotein E2</molecule>
    <subcellularLocation>
        <location evidence="19">Virion membrane</location>
        <topology evidence="19">Single-pass type I membrane protein</topology>
    </subcellularLocation>
    <subcellularLocation>
        <location>Host endoplasmic reticulum membrane</location>
        <topology evidence="5">Single-pass type I membrane protein</topology>
    </subcellularLocation>
    <subcellularLocation>
        <location evidence="12">Host lipid droplet</location>
    </subcellularLocation>
    <text evidence="5">The C-terminal transmembrane domain acts as a signal sequence and forms a hairpin structure before cleavage by host signal peptidase (By similarity). After cleavage, the membrane sequence is retained at the C-terminus of the protein, serving as ER membrane anchor (By similarity). A reorientation of the second hydrophobic stretch occurs after cleavage producing a single reoriented transmembrane domain (By similarity). These events explain the final topology of the protein (By similarity).</text>
</comment>
<comment type="subcellular location">
    <molecule>Viroporin p7</molecule>
    <subcellularLocation>
        <location evidence="5">Host endoplasmic reticulum membrane</location>
        <topology evidence="5">Multi-pass membrane protein</topology>
    </subcellularLocation>
    <subcellularLocation>
        <location evidence="5">Host mitochondrion</location>
    </subcellularLocation>
    <subcellularLocation>
        <location evidence="5">Host cell membrane</location>
    </subcellularLocation>
    <text evidence="5">The C-terminus of p7 membrane domain acts as a signal sequence (By similarity). After cleavage by host signal peptidase, the membrane sequence is retained at the C-terminus of the protein, serving as ER membrane anchor (By similarity). ER retention of p7 is leaky and a small fraction reaches the plasma membrane (By similarity).</text>
</comment>
<comment type="subcellular location">
    <molecule>Protease NS2</molecule>
    <subcellularLocation>
        <location evidence="5">Host endoplasmic reticulum membrane</location>
        <topology evidence="5">Multi-pass membrane protein</topology>
    </subcellularLocation>
    <subcellularLocation>
        <location evidence="12">Host lipid droplet</location>
    </subcellularLocation>
    <text evidence="11">Probably present on the surface of lipid droplets.</text>
</comment>
<comment type="subcellular location">
    <molecule>Serine protease/helicase NS3</molecule>
    <subcellularLocation>
        <location evidence="19">Host endoplasmic reticulum membrane</location>
        <topology evidence="19">Peripheral membrane protein</topology>
    </subcellularLocation>
    <text evidence="19">NS3 is associated to the ER membrane through its binding to NS4A.</text>
</comment>
<comment type="subcellular location">
    <molecule>Non-structural protein 4A</molecule>
    <subcellularLocation>
        <location evidence="19">Host endoplasmic reticulum membrane</location>
        <topology evidence="19">Single-pass type I membrane protein</topology>
    </subcellularLocation>
    <text>Host membrane insertion occurs after processing by the NS3 protease.</text>
</comment>
<comment type="subcellular location">
    <molecule>Non-structural protein 4B</molecule>
    <subcellularLocation>
        <location evidence="5">Host endoplasmic reticulum membrane</location>
        <topology evidence="5">Multi-pass membrane protein</topology>
    </subcellularLocation>
    <text evidence="5">A reorientation of the N-terminus into the ER lumen occurs post-translationally.</text>
</comment>
<comment type="subcellular location">
    <molecule>Non-structural protein 5A</molecule>
    <subcellularLocation>
        <location evidence="5">Host endoplasmic reticulum membrane</location>
        <topology evidence="5">Peripheral membrane protein</topology>
    </subcellularLocation>
    <subcellularLocation>
        <location evidence="5">Host cytoplasm</location>
        <location evidence="5">Host perinuclear region</location>
    </subcellularLocation>
    <subcellularLocation>
        <location evidence="2">Host mitochondrion</location>
    </subcellularLocation>
    <subcellularLocation>
        <location evidence="5">Host cytoplasm</location>
    </subcellularLocation>
    <subcellularLocation>
        <location evidence="2">Host nucleus</location>
    </subcellularLocation>
    <subcellularLocation>
        <location evidence="12">Host lipid droplet</location>
    </subcellularLocation>
    <text evidence="2 5">Host membrane insertion occurs after processing by the NS3 protease (By similarity). Localizes at the surface of lipid droplets (By similarity).</text>
</comment>
<comment type="subcellular location">
    <molecule>RNA-directed RNA polymerase</molecule>
    <subcellularLocation>
        <location evidence="5">Host cytoplasm</location>
    </subcellularLocation>
    <subcellularLocation>
        <location>Host endoplasmic reticulum membrane</location>
        <topology evidence="5">Single-pass type IV membrane protein</topology>
    </subcellularLocation>
    <text evidence="5">Host membrane insertion occurs after processing by the NS3 protease.</text>
</comment>
<comment type="domain">
    <molecule>Envelope glycoprotein E1</molecule>
    <text evidence="5">The transmembrane regions of envelope E1 and E2 glycoproteins are involved in heterodimer formation, ER localization, and assembly of these proteins.</text>
</comment>
<comment type="domain">
    <molecule>Envelope glycoprotein E2</molecule>
    <text evidence="3 5">The transmembrane regions of envelope E1 and E2 glycoproteins are involved in heterodimer formation, ER localization, and assembly of these proteins (By similarity). Envelope E2 glycoprotein contain two highly variable regions called hypervariable region 1 and 2 (HVR1 and HVR2) (By similarity). E2 also contain two segments involved in CD81-binding (By similarity). HVR1 is implicated in the SCARB1-mediated cell entry and probably acts as a regulator of the association of particles with lipids (By similarity).</text>
</comment>
<comment type="domain">
    <molecule>Protease NS2</molecule>
    <text evidence="3">The N-terminus of NS3 is required for the catalytic activity of protease NS2 (By similarity). The minimal catalytic region includes the C-terminus of NS2 and the N-terminus NS3 protease domain (active region NS2-3) (By similarity).</text>
</comment>
<comment type="domain">
    <molecule>Serine protease/helicase NS3</molecule>
    <text evidence="2 5">The N-terminal one-third contains the protease activity (By similarity). This region contains a zinc atom that does not belong to the active site, but may play a structural rather than a catalytic role (By similarity). This region is essential for the activity of protease NS2, maybe by contributing to the folding of the latter (By similarity). The NTPase/helicase activity is located in the twothirds C-terminus of NS3, this domain contains the NTPase and RNA-binding regions (By similarity).</text>
</comment>
<comment type="domain">
    <molecule>Non-structural protein 4B</molecule>
    <text evidence="11">Contains a glycine zipper region that critically contributes to the biogenesis of functional ER-derived replication organelles.</text>
</comment>
<comment type="domain">
    <molecule>Non-structural protein 5A</molecule>
    <text evidence="2 5">The N-terminus of NS5A acts as membrane anchor (By similarity). The central part of NS5A contains a variable region called interferon sensitivity determining region (ISDR) and seems to be intrinsically disordered and interacts with NS5B and host EIF2AK2 (By similarity). The C-terminus of NS5A contains a variable region called variable region 3 (V3) (By similarity). ISDR and V3 may be involved in sensitivity and/or resistance to IFN-alpha therapy (By similarity). The C-terminus contains a nuclear localization signal (By similarity). The SH3-binding domain is involved in the interaction with host BIN1, GRB2 and Src-family kinases (By similarity).</text>
</comment>
<comment type="PTM">
    <molecule>Genome polyprotein</molecule>
    <text evidence="4 5">Specific enzymatic cleavages in vivo yield mature proteins (By similarity). The structural proteins, core, E1, E2 and p7 are produced by proteolytic processing by host signal peptidases (By similarity). The core protein precursor is synthesized as a 23 kDa, which is retained in the ER membrane through the hydrophobic signal peptide (By similarity). Cleavage by the signal peptidase releases the 21 kDa mature core protein (By similarity). The cleavage of the core protein precursor occurs between aminoacids 176 and 188 but the exact cleavage site is not known (By similarity). Some degraded forms of the core protein appear as well during the course of infection (By similarity). The other proteins (p7, NS2, NS3, NS4A, NS4B, NS5A and NS5B) are cleaved by the viral proteases (By similarity). Autoprocessing between NS2 and NS3 is mediated by the NS2 cysteine protease catalytic domain and regulated by the NS3 N-terminal domain (By similarity).</text>
</comment>
<comment type="PTM">
    <molecule>Mature core protein</molecule>
    <text evidence="7">Phosphorylated by host PKC and PKA.</text>
</comment>
<comment type="PTM">
    <molecule>Mature core protein</molecule>
    <text evidence="8">Ubiquitinated; mediated by UBE3A and leading to core protein subsequent proteasomal degradation.</text>
</comment>
<comment type="PTM">
    <molecule>Envelope glycoprotein E1</molecule>
    <text evidence="5">Highly N-glycosylated.</text>
</comment>
<comment type="PTM">
    <molecule>Envelope glycoprotein E2</molecule>
    <text evidence="5">Highly N-glycosylated.</text>
</comment>
<comment type="PTM">
    <molecule>Protease NS2</molecule>
    <text evidence="5">Palmitoylation is required for NS2/3 autoprocessing and E2 recruitment to membranes.</text>
</comment>
<comment type="PTM">
    <molecule>Non-structural protein 4B</molecule>
    <text evidence="5">Palmitoylated. This modification may play a role in its polymerization or in protein-protein interactions.</text>
</comment>
<comment type="PTM">
    <molecule>Non-structural protein 5A</molecule>
    <text evidence="2 4">Phosphorylated on serines in a basal form termed p56 (By similarity). p58 is a hyperphosphorylated form of p56 (By similarity). p56 and p58 coexist in the cell in roughly equivalent amounts (By similarity). Hyperphosphorylation is dependent on the presence of NS4A (By similarity). Host CSNK1A1/CKI-alpha or RPS6KB1 kinases may be responsible for NS5A phosphorylation (By similarity).</text>
</comment>
<comment type="PTM">
    <molecule>Non-structural protein 5A</molecule>
    <text evidence="11">Tyrosine phosphorylation is essential for the interaction with host SRC.</text>
</comment>
<comment type="PTM">
    <molecule>Non-structural protein 5A</molecule>
    <text evidence="5">Ubiquitinated (By similarity). Ubiquitination, most probably at Lys-2350, mediated by host IFI27 and SKP2 leads to proteasomal degradation, restricting viral infection (By similarity). Ubiquitination by host TRIM22 leads to interruption of viral replication (By similarity).</text>
</comment>
<comment type="PTM">
    <molecule>RNA-directed RNA polymerase</molecule>
    <text evidence="2">The N-terminus is phosphorylated by host PRK2/PKN2.</text>
</comment>
<comment type="miscellaneous">
    <text evidence="19">Viral particle assembly takes place at the surface of ER-derived membranes in close proximity to lipid droplets. NS2 associates with E1/E2 glycoproteins, NS3 and NS5A, which interacts with the viral RNA and core protein to promote genome encapsidation. The nucleocapsid buds at the ER membrane where E1/E2 glycoproteins are anchored and afterward associate with nascent lipid droplet to acquire APOE and APOC. Secretion of viral particles is probably regulated by viroporin p7.</text>
</comment>
<comment type="miscellaneous">
    <molecule>Non-structural protein 5A</molecule>
    <text evidence="19">Cell culture adaptation of the virus leads to mutations in NS5A, reducing its inhibitory effect on replication.</text>
</comment>
<comment type="miscellaneous">
    <molecule>Mature core protein</molecule>
    <text evidence="2">Exerts viral interference on hepatitis B virus when HCV and HBV coinfect the same cell, by suppressing HBV gene expression, RNA encapsidation and budding.</text>
</comment>
<comment type="similarity">
    <text evidence="19">Belongs to the hepacivirus polyprotein family.</text>
</comment>
<comment type="caution">
    <text evidence="19">The core gene probably also codes for alternative reading frame proteins (ARFPs). Many functions depicted for the core protein might belong to the ARFPs.</text>
</comment>
<name>POLG_HCVJP</name>
<evidence type="ECO:0000250" key="1">
    <source>
        <dbReference type="UniProtKB" id="O92972"/>
    </source>
</evidence>
<evidence type="ECO:0000250" key="2">
    <source>
        <dbReference type="UniProtKB" id="P26662"/>
    </source>
</evidence>
<evidence type="ECO:0000250" key="3">
    <source>
        <dbReference type="UniProtKB" id="P26663"/>
    </source>
</evidence>
<evidence type="ECO:0000250" key="4">
    <source>
        <dbReference type="UniProtKB" id="P26664"/>
    </source>
</evidence>
<evidence type="ECO:0000250" key="5">
    <source>
        <dbReference type="UniProtKB" id="P27958"/>
    </source>
</evidence>
<evidence type="ECO:0000250" key="6">
    <source>
        <dbReference type="UniProtKB" id="P29846"/>
    </source>
</evidence>
<evidence type="ECO:0000250" key="7">
    <source>
        <dbReference type="UniProtKB" id="Q01403"/>
    </source>
</evidence>
<evidence type="ECO:0000250" key="8">
    <source>
        <dbReference type="UniProtKB" id="Q03463"/>
    </source>
</evidence>
<evidence type="ECO:0000250" key="9">
    <source>
        <dbReference type="UniProtKB" id="Q5EG65"/>
    </source>
</evidence>
<evidence type="ECO:0000250" key="10">
    <source>
        <dbReference type="UniProtKB" id="Q913V3"/>
    </source>
</evidence>
<evidence type="ECO:0000250" key="11">
    <source>
        <dbReference type="UniProtKB" id="Q99IB8"/>
    </source>
</evidence>
<evidence type="ECO:0000250" key="12">
    <source>
        <dbReference type="UniProtKB" id="Q9WMX2"/>
    </source>
</evidence>
<evidence type="ECO:0000255" key="13"/>
<evidence type="ECO:0000255" key="14">
    <source>
        <dbReference type="PROSITE-ProRule" id="PRU00539"/>
    </source>
</evidence>
<evidence type="ECO:0000255" key="15">
    <source>
        <dbReference type="PROSITE-ProRule" id="PRU00541"/>
    </source>
</evidence>
<evidence type="ECO:0000255" key="16">
    <source>
        <dbReference type="PROSITE-ProRule" id="PRU01030"/>
    </source>
</evidence>
<evidence type="ECO:0000255" key="17">
    <source>
        <dbReference type="PROSITE-ProRule" id="PRU01166"/>
    </source>
</evidence>
<evidence type="ECO:0000256" key="18">
    <source>
        <dbReference type="SAM" id="MobiDB-lite"/>
    </source>
</evidence>
<evidence type="ECO:0000305" key="19"/>
<organismHost>
    <name type="scientific">Homo sapiens</name>
    <name type="common">Human</name>
    <dbReference type="NCBI Taxonomy" id="9606"/>
</organismHost>
<keyword id="KW-0007">Acetylation</keyword>
<keyword id="KW-1072">Activation of host autophagy by virus</keyword>
<keyword id="KW-0053">Apoptosis</keyword>
<keyword id="KW-0067">ATP-binding</keyword>
<keyword id="KW-0167">Capsid protein</keyword>
<keyword id="KW-1165">Clathrin-mediated endocytosis of virus by host</keyword>
<keyword id="KW-1015">Disulfide bond</keyword>
<keyword id="KW-1170">Fusion of virus membrane with host endosomal membrane</keyword>
<keyword id="KW-1168">Fusion of virus membrane with host membrane</keyword>
<keyword id="KW-1078">G1/S host cell cycle checkpoint dysregulation by virus</keyword>
<keyword id="KW-0325">Glycoprotein</keyword>
<keyword id="KW-0347">Helicase</keyword>
<keyword id="KW-1032">Host cell membrane</keyword>
<keyword id="KW-1035">Host cytoplasm</keyword>
<keyword id="KW-1038">Host endoplasmic reticulum</keyword>
<keyword id="KW-1041">Host lipid droplet</keyword>
<keyword id="KW-1043">Host membrane</keyword>
<keyword id="KW-1045">Host mitochondrion</keyword>
<keyword id="KW-1048">Host nucleus</keyword>
<keyword id="KW-0945">Host-virus interaction</keyword>
<keyword id="KW-0378">Hydrolase</keyword>
<keyword id="KW-1090">Inhibition of host innate immune response by virus</keyword>
<keyword id="KW-1114">Inhibition of host interferon signaling pathway by virus</keyword>
<keyword id="KW-1097">Inhibition of host MAVS by virus</keyword>
<keyword id="KW-1113">Inhibition of host RLR pathway by virus</keyword>
<keyword id="KW-1105">Inhibition of host STAT1 by virus</keyword>
<keyword id="KW-1110">Inhibition of host TRAFs by virus</keyword>
<keyword id="KW-0922">Interferon antiviral system evasion</keyword>
<keyword id="KW-0407">Ion channel</keyword>
<keyword id="KW-0406">Ion transport</keyword>
<keyword id="KW-1017">Isopeptide bond</keyword>
<keyword id="KW-0449">Lipoprotein</keyword>
<keyword id="KW-0460">Magnesium</keyword>
<keyword id="KW-0472">Membrane</keyword>
<keyword id="KW-0479">Metal-binding</keyword>
<keyword id="KW-1121">Modulation of host cell cycle by virus</keyword>
<keyword id="KW-0511">Multifunctional enzyme</keyword>
<keyword id="KW-0547">Nucleotide-binding</keyword>
<keyword id="KW-0548">Nucleotidyltransferase</keyword>
<keyword id="KW-0553">Oncogene</keyword>
<keyword id="KW-0564">Palmitate</keyword>
<keyword id="KW-0597">Phosphoprotein</keyword>
<keyword id="KW-0645">Protease</keyword>
<keyword id="KW-0687">Ribonucleoprotein</keyword>
<keyword id="KW-0694">RNA-binding</keyword>
<keyword id="KW-0696">RNA-directed RNA polymerase</keyword>
<keyword id="KW-0720">Serine protease</keyword>
<keyword id="KW-0729">SH3-binding</keyword>
<keyword id="KW-0788">Thiol protease</keyword>
<keyword id="KW-0804">Transcription</keyword>
<keyword id="KW-0805">Transcription regulation</keyword>
<keyword id="KW-0808">Transferase</keyword>
<keyword id="KW-0812">Transmembrane</keyword>
<keyword id="KW-1133">Transmembrane helix</keyword>
<keyword id="KW-0813">Transport</keyword>
<keyword id="KW-0832">Ubl conjugation</keyword>
<keyword id="KW-1161">Viral attachment to host cell</keyword>
<keyword id="KW-0261">Viral envelope protein</keyword>
<keyword id="KW-0899">Viral immunoevasion</keyword>
<keyword id="KW-1182">Viral ion channel</keyword>
<keyword id="KW-0543">Viral nucleoprotein</keyword>
<keyword id="KW-1162">Viral penetration into host cytoplasm</keyword>
<keyword id="KW-0693">Viral RNA replication</keyword>
<keyword id="KW-0946">Virion</keyword>
<keyword id="KW-1164">Virus endocytosis by host</keyword>
<keyword id="KW-1160">Virus entry into host cell</keyword>
<keyword id="KW-0862">Zinc</keyword>
<accession>Q9DHD6</accession>